<sequence>MVFTVSCSKMSSIVDRDDSSIFDGLVEEDDKDKAKRVSRNKSEKKRRDQFNVLIKELGSMLPGNARKMDKSTVLQKSIDFLRKHKETTAQSDASEIRQDWKPTFLSNEEFTQLMLEALDGFFLAIMTDGSIIYVSESVTSLLEHLPSDLVDQSIFNFIPEGEHSEVYKILSTHLLESDSLTPEYLKSKNQLEFCCHMLRGTIDPKEPSTYEYVRFIGNFKSLTSVSTSTHNGFEGTIQRTHRPSYEDRVCFVATVRLATPQFIKEMCTVEEPNEEFTSRHSLEWKFLFLDHRAPPIIGYLPFEVLGTSGYDYYHVDDLENLAKCHEHLMQYGKGKSCYYRFLTKGQQWIWLQTHYYITYHQWNSRPEFIVCTHTVVSYAEVRAERRRELGIEESLPETAADKSQDSGSDNRINTVSLKEALERFDHSPTPSASSRSSRKSSHTAVSDPSSTPTKIPTDTSTPPRQHLPAHEKMTQRRSSFSSQSINSQSVGPSLTQPAMSQAANLPIPQGMSQFQFSAQLGAMQHLKDQLEQRTRMIEANIHRQQEELRKIQEQLQMVHGQGLQMFLQQSNPGLNFGSVQLSSGNSNIQQLTPVNMQGQVVPANQVQSGHISTGQHMIQQQTLQSTSTQQSQQSVMSGHSQQTSLPSQTPSTLTAPLYNTMVISQPAAGSMVQIPSSMPQNSTQSATVTTFTQDRQIRFSQGQQLVTKLVTAPVACGAVMVPSTMLMGQVVTAYPTFATQQQQAQTLSVTQQQQQQQQQPPQQQQQQQQSSQEQQLPSVQQPAQAQLGQPPQQFLQTSRLLHGNPSTQLILSAAFPLQQSTFPPSHHQQHQPQQQQQLPRHRTDSLTDPSKVQPQ</sequence>
<name>CLOCK_MOUSE</name>
<reference key="1">
    <citation type="journal article" date="1997" name="Cell">
        <title>Functional identification of the mouse circadian clock gene by transgenic BAC rescue.</title>
        <authorList>
            <person name="Antoch M.P."/>
            <person name="Song E.J."/>
            <person name="Chang A.M."/>
            <person name="Vitaterna M.H."/>
            <person name="Zhao Y."/>
            <person name="Wilsbacher L.D."/>
            <person name="Sangoram A.M."/>
            <person name="King D.P."/>
            <person name="Pinto L.H."/>
            <person name="Takahashi J.S."/>
        </authorList>
    </citation>
    <scope>NUCLEOTIDE SEQUENCE [MRNA] (ISOFORM LONG)</scope>
    <source>
        <strain>129</strain>
    </source>
</reference>
<reference key="2">
    <citation type="journal article" date="1997" name="Cell">
        <title>Positional cloning of the mouse circadian clock gene.</title>
        <authorList>
            <person name="King D.P."/>
            <person name="Zhao Y."/>
            <person name="Sangoram A.M."/>
            <person name="Wilsbacher L.D."/>
            <person name="Tanaka M."/>
            <person name="Antoch M.P."/>
            <person name="Steeves T.D.L."/>
            <person name="Vitaterna M.H."/>
            <person name="Kornhauser J.M."/>
            <person name="Lowrey P.L."/>
            <person name="Turek F.W."/>
            <person name="Takahashi J.S."/>
        </authorList>
    </citation>
    <scope>NUCLEOTIDE SEQUENCE [GENOMIC DNA / MRNA] (ISOFORMS LONG AND SHORT)</scope>
    <scope>TISSUE SPECIFICITY</scope>
    <scope>IDENTIFICATION OF CLOCK VARIANT</scope>
    <scope>POLYMORPHISM</scope>
    <source>
        <strain>C57BL/6 X BALB/c</strain>
        <tissue>Suprachiasmatic nucleus</tissue>
    </source>
</reference>
<reference key="3">
    <citation type="journal article" date="2000" name="Genome Res.">
        <title>The mouse Clock locus: sequence and comparative analysis of 204 kb from mouse chromosome 5.</title>
        <authorList>
            <person name="Wilsbacher L.D."/>
            <person name="Sangoram A.M."/>
            <person name="Antoch M.P."/>
            <person name="Takahashi J.S."/>
        </authorList>
    </citation>
    <scope>NUCLEOTIDE SEQUENCE [GENOMIC DNA]</scope>
    <source>
        <strain>129/Sv</strain>
    </source>
</reference>
<reference key="4">
    <citation type="journal article" date="1998" name="Science">
        <title>Role of the CLOCK protein in the mammalian circadian mechanism.</title>
        <authorList>
            <person name="Gekakis N."/>
            <person name="Staknis D."/>
            <person name="Nguyen H.B."/>
            <person name="Davis F.C."/>
            <person name="Wilsbacher L.D."/>
            <person name="King D.P."/>
            <person name="Takahashi J.S."/>
            <person name="Weitz C.J."/>
        </authorList>
    </citation>
    <scope>INTERACTION WITH BMAL1</scope>
</reference>
<reference key="5">
    <citation type="journal article" date="2001" name="Cell">
        <title>Posttranslational mechanisms regulate the mammalian circadian clock.</title>
        <authorList>
            <person name="Lee C."/>
            <person name="Etchegaray J.-P."/>
            <person name="Cagampang F.R.A."/>
            <person name="Loudon A.S.I."/>
            <person name="Reppert S.M."/>
        </authorList>
    </citation>
    <scope>IDENTIFICATION IN A COMPLEX WITH BMAL1; PER1; PER2; CRY1; CRY2; CSNK1D AND CSNK1E</scope>
    <scope>PHOSPHORYLATION</scope>
    <scope>SUBCELLULAR LOCATION</scope>
    <scope>INDUCTION</scope>
</reference>
<reference key="6">
    <citation type="journal article" date="2003" name="Genes Dev.">
        <title>BMAL1-dependent circadian oscillation of nuclear CLOCK: posttranslational events induced by dimerization of transcriptional activators of the mammalian clock system.</title>
        <authorList>
            <person name="Kondratov R.V."/>
            <person name="Chernov M.V."/>
            <person name="Kondratova A.A."/>
            <person name="Gorbacheva V.Y."/>
            <person name="Gudkov A.V."/>
            <person name="Antoch M.P."/>
        </authorList>
    </citation>
    <scope>INTERACTION WITH BMAL1</scope>
    <scope>PHOSPHORYLATION</scope>
    <scope>SUBCELLULAR LOCATION</scope>
    <scope>INDUCTION</scope>
</reference>
<reference key="7">
    <citation type="journal article" date="2003" name="J. Mol. Cell. Cardiol.">
        <title>Regulation of the PAI-1 promoter by circadian clock components: differential activation by BMAL1 and BMAL2.</title>
        <authorList>
            <person name="Schoenhard J.A."/>
            <person name="Smith L.H."/>
            <person name="Painter C.A."/>
            <person name="Eren M."/>
            <person name="Johnson C.H."/>
            <person name="Vaughan D.E."/>
        </authorList>
    </citation>
    <scope>FUNCTION</scope>
</reference>
<reference key="8">
    <citation type="journal article" date="2004" name="Biochem. Biophys. Res. Commun.">
        <title>A novel autofeedback loop of Dec1 transcription involved in circadian rhythm regulation.</title>
        <authorList>
            <person name="Kawamoto T."/>
            <person name="Noshiro M."/>
            <person name="Sato F."/>
            <person name="Maemura K."/>
            <person name="Takeda N."/>
            <person name="Nagai R."/>
            <person name="Iwata T."/>
            <person name="Fujimoto K."/>
            <person name="Furukawa M."/>
            <person name="Miyazaki K."/>
            <person name="Honma S."/>
            <person name="Honma K.I."/>
            <person name="Kato Y."/>
        </authorList>
    </citation>
    <scope>FUNCTION</scope>
</reference>
<reference key="9">
    <citation type="journal article" date="2004" name="J. Biol. Chem.">
        <title>Histone acetyltransferase-dependent chromatin remodeling and the vascular clock.</title>
        <authorList>
            <person name="Curtis A.M."/>
            <person name="Seo S.B."/>
            <person name="Westgate E.J."/>
            <person name="Rudic R.D."/>
            <person name="Smyth E.M."/>
            <person name="Chakravarti D."/>
            <person name="FitzGerald G.A."/>
            <person name="McNamara P."/>
        </authorList>
    </citation>
    <scope>INDUCTION</scope>
</reference>
<reference key="10">
    <citation type="journal article" date="2006" name="Cell">
        <title>Circadian regulator CLOCK is a histone acetyltransferase.</title>
        <authorList>
            <person name="Doi M."/>
            <person name="Hirayama J."/>
            <person name="Sassone-Corsi P."/>
        </authorList>
    </citation>
    <scope>MUTAGENESIS OF PRO-656; TYR-658; ASN-659; GLY-669; SER-670 AND VAL-672</scope>
    <scope>FUNCTION</scope>
    <scope>CATALYTIC ACTIVITY</scope>
</reference>
<reference key="11">
    <citation type="journal article" date="2006" name="J. Biol. Chem.">
        <title>The polycomb group protein EZH2 is required for mammalian circadian clock function.</title>
        <authorList>
            <person name="Etchegaray J.P."/>
            <person name="Yang X."/>
            <person name="DeBruyne J.P."/>
            <person name="Peters A.H."/>
            <person name="Weaver D.R."/>
            <person name="Jenuwein T."/>
            <person name="Reppert S.M."/>
        </authorList>
    </citation>
    <scope>INTERACTION WITH EZH2; BMAL1; PER1; PER2; CRY1 AND CRY2</scope>
</reference>
<reference key="12">
    <citation type="journal article" date="2006" name="Mol. Cell. Biol.">
        <title>BMAL1 shuttling controls transactivation and degradation of the CLOCK/BMAL1 heterodimer.</title>
        <authorList>
            <person name="Kwon I."/>
            <person name="Lee J."/>
            <person name="Chang S.H."/>
            <person name="Jung N.C."/>
            <person name="Lee B.J."/>
            <person name="Son G.H."/>
            <person name="Kim K."/>
            <person name="Lee K.H."/>
        </authorList>
    </citation>
    <scope>SUBCELLULAR LOCATION</scope>
    <scope>INTERACTION WITH BMAL1</scope>
    <scope>UBIQUITINATION</scope>
    <scope>PROTEASOMAL DEGRADATION</scope>
</reference>
<reference key="13">
    <citation type="journal article" date="2007" name="Nat. Cell Biol.">
        <title>CIPC is a mammalian circadian clock protein without invertebrate homologues.</title>
        <authorList>
            <person name="Zhao W.N."/>
            <person name="Malinin N."/>
            <person name="Yang F.C."/>
            <person name="Staknis D."/>
            <person name="Gekakis N."/>
            <person name="Maier B."/>
            <person name="Reischl S."/>
            <person name="Kramer A."/>
            <person name="Weitz C.J."/>
        </authorList>
    </citation>
    <scope>SUBCELLULAR LOCATION</scope>
    <scope>INTERACTION WITH CIPC</scope>
</reference>
<reference key="14">
    <citation type="journal article" date="2007" name="Nat. Neurosci.">
        <title>CLOCK and NPAS2 have overlapping roles in the suprachiasmatic circadian clock.</title>
        <authorList>
            <person name="DeBruyne J.P."/>
            <person name="Weaver D.R."/>
            <person name="Reppert S.M."/>
        </authorList>
    </citation>
    <scope>FUNCTION</scope>
</reference>
<reference key="15">
    <citation type="journal article" date="2007" name="Nature">
        <title>CLOCK-mediated acetylation of BMAL1 controls circadian function.</title>
        <authorList>
            <person name="Hirayama J."/>
            <person name="Sahar S."/>
            <person name="Grimaldi B."/>
            <person name="Tamaru T."/>
            <person name="Takamatsu K."/>
            <person name="Nakahata Y."/>
            <person name="Sassone-Corsi P."/>
        </authorList>
    </citation>
    <scope>FUNCTION IN ACETYLATION OF BMAL1</scope>
</reference>
<reference key="16">
    <citation type="journal article" date="2007" name="Proc. Natl. Acad. Sci. U.S.A.">
        <title>Large-scale phosphorylation analysis of mouse liver.</title>
        <authorList>
            <person name="Villen J."/>
            <person name="Beausoleil S.A."/>
            <person name="Gerber S.A."/>
            <person name="Gygi S.P."/>
        </authorList>
    </citation>
    <scope>PHOSPHORYLATION [LARGE SCALE ANALYSIS] AT SER-408</scope>
    <scope>IDENTIFICATION BY MASS SPECTROMETRY [LARGE SCALE ANALYSIS]</scope>
    <source>
        <tissue>Liver</tissue>
    </source>
</reference>
<reference key="17">
    <citation type="journal article" date="2008" name="BMC Mol. Biol.">
        <title>Interaction of circadian clock proteins PER2 and CRY with BMAL1 and CLOCK.</title>
        <authorList>
            <person name="Langmesser S."/>
            <person name="Tallone T."/>
            <person name="Bordon A."/>
            <person name="Rusconi S."/>
            <person name="Albrecht U."/>
        </authorList>
    </citation>
    <scope>INTERACTION WITH PER2</scope>
</reference>
<reference key="18">
    <citation type="journal article" date="2008" name="Cell">
        <title>SIRT1 regulates circadian clock gene expression through PER2 deacetylation.</title>
        <authorList>
            <person name="Asher G."/>
            <person name="Gatfield D."/>
            <person name="Stratmann M."/>
            <person name="Reinke H."/>
            <person name="Dibner C."/>
            <person name="Kreppel F."/>
            <person name="Mostoslavsky R."/>
            <person name="Alt F.W."/>
            <person name="Schibler U."/>
        </authorList>
    </citation>
    <scope>SUBCELLULAR LOCATION</scope>
    <scope>INTERACTION WITH SIRT1; BMAL1; PER2 AND CRY1</scope>
</reference>
<reference key="19">
    <citation type="journal article" date="2008" name="Cell">
        <title>The NAD+-dependent deacetylase SIRT1 modulates CLOCK-mediated chromatin remodeling and circadian control.</title>
        <authorList>
            <person name="Nakahata Y."/>
            <person name="Kaluzova M."/>
            <person name="Grimaldi B."/>
            <person name="Sahar S."/>
            <person name="Hirayama J."/>
            <person name="Chen D."/>
            <person name="Guarente L.P."/>
            <person name="Sassone-Corsi P."/>
        </authorList>
    </citation>
    <scope>INTERACTION WITH SIRT1</scope>
</reference>
<reference key="20">
    <citation type="journal article" date="2008" name="Mol. Cell. Biol.">
        <title>Evidence for an overlapping role of CLOCK and NPAS2 transcription factors in liver circadian oscillators.</title>
        <authorList>
            <person name="Bertolucci C."/>
            <person name="Cavallari N."/>
            <person name="Colognesi I."/>
            <person name="Aguzzi J."/>
            <person name="Chen Z."/>
            <person name="Caruso P."/>
            <person name="Foa A."/>
            <person name="Tosini G."/>
            <person name="Bernardi F."/>
            <person name="Pinotti M."/>
        </authorList>
    </citation>
    <scope>FUNCTION</scope>
</reference>
<reference key="21">
    <citation type="journal article" date="2009" name="Cell Cycle">
        <title>A serine cluster mediates BMAL1-dependent CLOCK phosphorylation and degradation.</title>
        <authorList>
            <person name="Spengler M.L."/>
            <person name="Kuropatwinski K.K."/>
            <person name="Schumer M."/>
            <person name="Antoch M.P."/>
        </authorList>
    </citation>
    <scope>PHOSPHORYLATION AT SER-427 AND SER-431</scope>
    <scope>MUTAGENESIS OF SER-427 AND SER-431</scope>
    <scope>INTERACTION WITH GSK3B AND BMAL1</scope>
</reference>
<reference key="22">
    <citation type="journal article" date="2009" name="FASEB J.">
        <title>Circadian rhythm transcription factor CLOCK regulates the transcriptional activity of the glucocorticoid receptor by acetylating its hinge region lysine cluster: potential physiological implications.</title>
        <authorList>
            <person name="Nader N."/>
            <person name="Chrousos G.P."/>
            <person name="Kino T."/>
        </authorList>
    </citation>
    <scope>FUNCTION</scope>
    <scope>INTERACTION WITH NR3C1</scope>
</reference>
<reference key="23">
    <citation type="journal article" date="2009" name="J. Biol. Chem.">
        <title>Preferential inhibition of BMAL2-CLOCK activity by PER2 reemphasizes its negative role and a positive role of BMAL2 in the circadian transcription.</title>
        <authorList>
            <person name="Sasaki M."/>
            <person name="Yoshitane H."/>
            <person name="Du N.H."/>
            <person name="Okano T."/>
            <person name="Fukada Y."/>
        </authorList>
    </citation>
    <scope>FUNCTION</scope>
</reference>
<reference key="24">
    <citation type="journal article" date="2009" name="Mol. Cell. Biol.">
        <title>Roles of CLOCK phosphorylation in suppression of E-box-dependent transcription.</title>
        <authorList>
            <person name="Yoshitane H."/>
            <person name="Takao T."/>
            <person name="Satomi Y."/>
            <person name="Du N.H."/>
            <person name="Okano T."/>
            <person name="Fukada Y."/>
        </authorList>
    </citation>
    <scope>SUBCELLULAR LOCATION</scope>
    <scope>NUCLEAR LOCALIZATION SIGNAL</scope>
    <scope>PHOSPHORYLATION AT SER-38; SER-42 AND SER-427</scope>
    <scope>MUTAGENESIS OF SER-38; SER-42 AND SER-427</scope>
</reference>
<reference key="25">
    <citation type="journal article" date="2009" name="Nucleic Acids Res.">
        <title>Molecular characterization of Mybbp1a as a co-repressor on the Period2 promoter.</title>
        <authorList>
            <person name="Hara Y."/>
            <person name="Onishi Y."/>
            <person name="Oishi K."/>
            <person name="Miyazaki K."/>
            <person name="Fukamizu A."/>
            <person name="Ishida N."/>
        </authorList>
    </citation>
    <scope>INTERACTION WITH MYBBP1A</scope>
</reference>
<reference key="26">
    <citation type="journal article" date="2009" name="Science">
        <title>Circadian clock feedback cycle through NAMPT-mediated NAD+ biosynthesis.</title>
        <authorList>
            <person name="Ramsey K.M."/>
            <person name="Yoshino J."/>
            <person name="Brace C.S."/>
            <person name="Abrassart D."/>
            <person name="Kobayashi Y."/>
            <person name="Marcheva B."/>
            <person name="Hong H.K."/>
            <person name="Chong J.L."/>
            <person name="Buhr E.D."/>
            <person name="Lee C."/>
            <person name="Takahashi J.S."/>
            <person name="Imai S."/>
            <person name="Bass J."/>
        </authorList>
    </citation>
    <scope>FUNCTION</scope>
</reference>
<reference key="27">
    <citation type="journal article" date="2009" name="Science">
        <title>Circadian control of the NAD+ salvage pathway by CLOCK-SIRT1.</title>
        <authorList>
            <person name="Nakahata Y."/>
            <person name="Sahar S."/>
            <person name="Astarita G."/>
            <person name="Kaluzova M."/>
            <person name="Sassone-Corsi P."/>
        </authorList>
    </citation>
    <scope>FUNCTION</scope>
</reference>
<reference key="28">
    <citation type="journal article" date="2010" name="J. Biol. Chem.">
        <title>CLOCK regulates circadian rhythms of hepatic glycogen synthesis through transcriptional activation of Gys2.</title>
        <authorList>
            <person name="Doi R."/>
            <person name="Oishi K."/>
            <person name="Ishida N."/>
        </authorList>
    </citation>
    <scope>FUNCTION</scope>
</reference>
<reference key="29">
    <citation type="journal article" date="2010" name="J. Biol. Chem.">
        <title>The transcriptional repressor ID2 can interact with the canonical clock components CLOCK and BMAL1 and mediate inhibitory effects on mPer1 expression.</title>
        <authorList>
            <person name="Ward S.M."/>
            <person name="Fernando S.J."/>
            <person name="Hou T.Y."/>
            <person name="Duffield G.E."/>
        </authorList>
    </citation>
    <scope>INTERACTION WITH ID1; ID2 AND ID3</scope>
</reference>
<reference key="30">
    <citation type="journal article" date="2010" name="Mol. Cell. Biol.">
        <title>Kruppel-like factor KLF10 is a link between the circadian clock and metabolism in liver.</title>
        <authorList>
            <person name="Guillaumond F."/>
            <person name="Grechez-Cassiau A."/>
            <person name="Subramaniam M."/>
            <person name="Brangolo S."/>
            <person name="Peteri-Brunback B."/>
            <person name="Staels B."/>
            <person name="Fievet C."/>
            <person name="Spelsberg T.C."/>
            <person name="Delaunay F."/>
            <person name="Teboul M."/>
        </authorList>
    </citation>
    <scope>FUNCTION</scope>
</reference>
<reference key="31">
    <citation type="journal article" date="2010" name="Nature">
        <title>Disruption of the clock components CLOCK and BMAL1 leads to hypoinsulinaemia and diabetes.</title>
        <authorList>
            <person name="Marcheva B."/>
            <person name="Ramsey K.M."/>
            <person name="Buhr E.D."/>
            <person name="Kobayashi Y."/>
            <person name="Su H."/>
            <person name="Ko C.H."/>
            <person name="Ivanova G."/>
            <person name="Omura C."/>
            <person name="Mo S."/>
            <person name="Vitaterna M.H."/>
            <person name="Lopez J.P."/>
            <person name="Philipson L.H."/>
            <person name="Bradfield C.A."/>
            <person name="Crosby S.D."/>
            <person name="Je Bailey L."/>
            <person name="Wang X."/>
            <person name="Takahashi J.S."/>
            <person name="Bass J."/>
        </authorList>
    </citation>
    <scope>FUNCTION</scope>
</reference>
<reference key="32">
    <citation type="journal article" date="2010" name="Nat. Struct. Mol. Biol.">
        <title>The histone methyltransferase MLL1 permits the oscillation of circadian gene expression.</title>
        <authorList>
            <person name="Katada S."/>
            <person name="Sassone-Corsi P."/>
        </authorList>
    </citation>
    <scope>INTERACTION WITH KMT2A</scope>
</reference>
<reference key="33">
    <citation type="journal article" date="2010" name="Proc. Natl. Acad. Sci. U.S.A.">
        <title>CLOCK and BMAL1 regulate MyoD and are necessary for maintenance of skeletal muscle phenotype and function.</title>
        <authorList>
            <person name="Andrews J.L."/>
            <person name="Zhang X."/>
            <person name="McCarthy J.J."/>
            <person name="McDearmon E.L."/>
            <person name="Hornberger T.A."/>
            <person name="Russell B."/>
            <person name="Campbell K.S."/>
            <person name="Arbogast S."/>
            <person name="Reid M.B."/>
            <person name="Walker J.R."/>
            <person name="Hogenesch J.B."/>
            <person name="Takahashi J.S."/>
            <person name="Esser K.A."/>
        </authorList>
    </citation>
    <scope>FUNCTION</scope>
</reference>
<reference key="34">
    <citation type="journal article" date="2011" name="J. Biol. Chem.">
        <title>cAMP-response element (CRE)-mediated transcription by activating transcription factor-4 (ATF4) is essential for circadian expression of the Period2 gene.</title>
        <authorList>
            <person name="Koyanagi S."/>
            <person name="Hamdan A.M."/>
            <person name="Horiguchi M."/>
            <person name="Kusunose N."/>
            <person name="Okamoto A."/>
            <person name="Matsunaga N."/>
            <person name="Ohdo S."/>
        </authorList>
    </citation>
    <scope>FUNCTION</scope>
</reference>
<reference key="35">
    <citation type="journal article" date="2011" name="J. Cell. Physiol.">
        <title>Deficiency in core circadian protein Bmal1 is associated with a prothrombotic and vascular phenotype.</title>
        <authorList>
            <person name="Somanath P.R."/>
            <person name="Podrez E.A."/>
            <person name="Chen J."/>
            <person name="Ma Y."/>
            <person name="Marchant K."/>
            <person name="Antoch M."/>
            <person name="Byzova T.V."/>
        </authorList>
    </citation>
    <scope>FUNCTION</scope>
</reference>
<reference key="36">
    <citation type="journal article" date="2011" name="Proc. Natl. Acad. Sci. U.S.A.">
        <title>The period of the circadian oscillator is primarily determined by the balance between casein kinase 1 and protein phosphatase 1.</title>
        <authorList>
            <person name="Lee H.M."/>
            <person name="Chen R."/>
            <person name="Kim H."/>
            <person name="Etchegaray J.P."/>
            <person name="Weaver D.R."/>
            <person name="Lee C."/>
        </authorList>
    </citation>
    <scope>PHOSPHORYLATION BY CSNK1D AND CKSN1E</scope>
</reference>
<reference key="37">
    <citation type="journal article" date="2011" name="Science">
        <title>Histone lysine demethylase JARID1a activates CLOCK-BMAL1 and influences the circadian clock.</title>
        <authorList>
            <person name="DiTacchio L."/>
            <person name="Le H.D."/>
            <person name="Vollmers C."/>
            <person name="Hatori M."/>
            <person name="Witcher M."/>
            <person name="Secombe J."/>
            <person name="Panda S."/>
        </authorList>
    </citation>
    <scope>INTERACTION WITH KDM5A</scope>
</reference>
<reference key="38">
    <citation type="journal article" date="2012" name="J. Thromb. Haemost.">
        <title>Diurnal expression of the thrombopoietin gene is regulated by CLOCK.</title>
        <authorList>
            <person name="Tracey C.J."/>
            <person name="Pan X."/>
            <person name="Catterson J.H."/>
            <person name="Harmar A.J."/>
            <person name="Hussain M.M."/>
            <person name="Hartley P.S."/>
        </authorList>
    </citation>
    <scope>FUNCTION</scope>
</reference>
<reference key="39">
    <citation type="journal article" date="2012" name="Mol. Cell">
        <title>Circadian Dbp transcription relies on highly dynamic BMAL1-CLOCK interaction with E boxes and requires the proteasome.</title>
        <authorList>
            <person name="Stratmann M."/>
            <person name="Suter D.M."/>
            <person name="Molina N."/>
            <person name="Naef F."/>
            <person name="Schibler U."/>
        </authorList>
    </citation>
    <scope>FUNCTION</scope>
</reference>
<reference key="40">
    <citation type="journal article" date="2012" name="PLoS ONE">
        <title>Circadian proteins CLOCK and BMAL1 in the chromatoid body, a RNA processing granule of male germ cells.</title>
        <authorList>
            <person name="Peruquetti R.L."/>
            <person name="de Mateo S."/>
            <person name="Sassone-Corsi P."/>
        </authorList>
    </citation>
    <scope>FUNCTION</scope>
    <scope>SUBCELLULAR LOCATION</scope>
    <scope>TISSUE SPECIFICITY</scope>
    <scope>INTERACTION WITH EIF4E; PIWIL1 AND DDX4</scope>
</reference>
<reference key="41">
    <citation type="journal article" date="2012" name="Proc. Natl. Acad. Sci. U.S.A.">
        <title>Core circadian protein CLOCK is a positive regulator of NF-kappaB-mediated transcription.</title>
        <authorList>
            <person name="Spengler M.L."/>
            <person name="Kuropatwinski K.K."/>
            <person name="Comas M."/>
            <person name="Gasparian A.V."/>
            <person name="Fedtsova N."/>
            <person name="Gleiberman A.S."/>
            <person name="Gitlin I.I."/>
            <person name="Artemicheva N.M."/>
            <person name="Deluca K.A."/>
            <person name="Gudkov A.V."/>
            <person name="Antoch M.P."/>
        </authorList>
    </citation>
    <scope>FUNCTION</scope>
    <scope>INTERACTION WITH RELA/P65</scope>
</reference>
<reference key="42">
    <citation type="journal article" date="2013" name="Am. J. Physiol.">
        <title>A role for the circadian clock protein Per1 in the regulation of aldosterone levels and renal Na+ retention.</title>
        <authorList>
            <person name="Richards J."/>
            <person name="Cheng K.Y."/>
            <person name="All S."/>
            <person name="Skopis G."/>
            <person name="Jeffers L."/>
            <person name="Lynch I.J."/>
            <person name="Wingo C.S."/>
            <person name="Gumz M.L."/>
        </authorList>
    </citation>
    <scope>INTERACTION WITH PER1</scope>
    <scope>TISSUE SPECIFICITY</scope>
</reference>
<reference key="43">
    <citation type="journal article" date="2013" name="Am. J. Physiol.">
        <title>Mechanism of the circadian clock in physiology.</title>
        <authorList>
            <person name="Richards J."/>
            <person name="Gumz M.L."/>
        </authorList>
    </citation>
    <scope>REVIEW</scope>
</reference>
<reference key="44">
    <citation type="journal article" date="2013" name="Biochem. Biophys. Res. Commun.">
        <title>The molecular clock regulates circadian transcription of tissue factor gene.</title>
        <authorList>
            <person name="Oishi K."/>
            <person name="Koyanagi S."/>
            <person name="Ohkura N."/>
        </authorList>
    </citation>
    <scope>FUNCTION</scope>
</reference>
<reference key="45">
    <citation type="journal article" date="2013" name="Cell Metab.">
        <title>Glucose sensor O-GlcNAcylation coordinates with phosphorylation to regulate circadian clock.</title>
        <authorList>
            <person name="Kaasik K."/>
            <person name="Kivimae S."/>
            <person name="Allen J.J."/>
            <person name="Chalkley R.J."/>
            <person name="Huang Y."/>
            <person name="Baer K."/>
            <person name="Kissel H."/>
            <person name="Burlingame A.L."/>
            <person name="Shokat K.M."/>
            <person name="Ptacek L.J."/>
            <person name="Fu Y.H."/>
        </authorList>
    </citation>
    <scope>GLYCOSYLATION</scope>
    <scope>INTERACTION WITH OGA</scope>
</reference>
<reference key="46">
    <citation type="journal article" date="2013" name="Cell Metab.">
        <title>O-GlcNAc signaling entrains the circadian clock by inhibiting BMAL1/CLOCK ubiquitination.</title>
        <authorList>
            <person name="Li M.D."/>
            <person name="Ruan H.B."/>
            <person name="Hughes M.E."/>
            <person name="Lee J.S."/>
            <person name="Singh J.P."/>
            <person name="Jones S.P."/>
            <person name="Nitabach M.N."/>
            <person name="Yang X."/>
        </authorList>
    </citation>
    <scope>GLYCOSYLATION</scope>
    <scope>UBIQUITINATION</scope>
</reference>
<reference key="47">
    <citation type="journal article" date="2013" name="Curr. Opin. Neurobiol.">
        <title>A role for clock genes in sleep homeostasis.</title>
        <authorList>
            <person name="Franken P."/>
        </authorList>
    </citation>
    <scope>REVIEW</scope>
</reference>
<reference key="48">
    <citation type="journal article" date="2013" name="J. Biol. Chem.">
        <title>Cyclin-dependent kinase 5 (Cdk5) regulates the function of CLOCK protein by direct phosphorylation.</title>
        <authorList>
            <person name="Kwak Y."/>
            <person name="Jeong J."/>
            <person name="Lee S."/>
            <person name="Park Y.U."/>
            <person name="Lee S.A."/>
            <person name="Han D.H."/>
            <person name="Kim J.H."/>
            <person name="Ohshima T."/>
            <person name="Mikoshiba K."/>
            <person name="Suh Y.H."/>
            <person name="Cho S."/>
            <person name="Park S.K."/>
        </authorList>
    </citation>
    <scope>PHOSPHORYLATION AT THR-451 AND THR-461</scope>
    <scope>INTERACTION WITH THE COMPLEX P35/CDK5</scope>
</reference>
<reference key="49">
    <citation type="journal article" date="2013" name="J. Clin. Invest.">
        <title>Circadian clock proteins regulate neuronal redox homeostasis and neurodegeneration.</title>
        <authorList>
            <person name="Musiek E.S."/>
            <person name="Lim M.M."/>
            <person name="Yang G."/>
            <person name="Bauer A.Q."/>
            <person name="Qi L."/>
            <person name="Lee Y."/>
            <person name="Roh J.H."/>
            <person name="Ortiz-Gonzalez X."/>
            <person name="Dearborn J.T."/>
            <person name="Culver J.P."/>
            <person name="Herzog E.D."/>
            <person name="Hogenesch J.B."/>
            <person name="Wozniak D.F."/>
            <person name="Dikranian K."/>
            <person name="Giasson B.I."/>
            <person name="Weaver D.R."/>
            <person name="Holtzman D.M."/>
            <person name="Fitzgerald G.A."/>
        </authorList>
    </citation>
    <scope>FUNCTION</scope>
</reference>
<reference key="50">
    <citation type="journal article" date="2013" name="J. Neurosci.">
        <title>p75 neurotrophin receptor is a clock gene that regulates oscillatory components of circadian and metabolic networks.</title>
        <authorList>
            <person name="Baeza-Raja B."/>
            <person name="Eckel-Mahan K."/>
            <person name="Zhang L."/>
            <person name="Vagena E."/>
            <person name="Tsigelny I.F."/>
            <person name="Sassone-Corsi P."/>
            <person name="Ptacek L.J."/>
            <person name="Akassoglou K."/>
        </authorList>
    </citation>
    <scope>FUNCTION</scope>
</reference>
<reference key="51">
    <citation type="journal article" date="2013" name="Nat. Commun.">
        <title>Metastasis-associated protein 1 is an integral component of the circadian molecular machinery.</title>
        <authorList>
            <person name="Li D.Q."/>
            <person name="Pakala S.B."/>
            <person name="Reddy S.D."/>
            <person name="Peng S."/>
            <person name="Balasenthil S."/>
            <person name="Deng C.X."/>
            <person name="Lee C.C."/>
            <person name="Rea M.A."/>
            <person name="Kumar R."/>
        </authorList>
    </citation>
    <scope>FUNCTION</scope>
    <scope>INTERACTION WITH MTA1</scope>
</reference>
<reference key="52">
    <citation type="journal article" date="2013" name="Oncogene">
        <title>CLOCK is a substrate of SUMO and sumoylation of CLOCK upregulates the transcriptional activity of estrogen receptor-alpha.</title>
        <authorList>
            <person name="Li S."/>
            <person name="Wang M."/>
            <person name="Ao X."/>
            <person name="Chang A.K."/>
            <person name="Yang C."/>
            <person name="Zhao F."/>
            <person name="Bi H."/>
            <person name="Liu Y."/>
            <person name="Xiao L."/>
            <person name="Wu H."/>
        </authorList>
    </citation>
    <scope>SUMOYLATION AT LYS-67 AND LYS-851</scope>
    <scope>DESUMOYLATION</scope>
    <scope>INTERACTION WITH ESR1</scope>
    <scope>MUTAGENESIS OF LYS-67 AND LYS-851</scope>
</reference>
<reference key="53">
    <citation type="journal article" date="2013" name="Physiol. Rev.">
        <title>Metabolism and the circadian clock converge.</title>
        <authorList>
            <person name="Eckel-Mahan K."/>
            <person name="Sassone-Corsi P."/>
        </authorList>
    </citation>
    <scope>REVIEW</scope>
</reference>
<reference key="54">
    <citation type="journal article" date="2013" name="Proc. Natl. Acad. Sci. U.S.A.">
        <title>A positive feedback loop links circadian clock factor CLOCK-BMAL1 to the basic transcriptional machinery.</title>
        <authorList>
            <person name="Lande-Diner L."/>
            <person name="Boyault C."/>
            <person name="Kim J.Y."/>
            <person name="Weitz C.J."/>
        </authorList>
    </citation>
    <scope>INTERACTION WITH THRAP3 AND MED1</scope>
</reference>
<reference key="55">
    <citation type="journal article" date="2014" name="Biochem. Biophys. Res. Commun.">
        <title>Clock upregulates intercellular adhesion molecule-1 expression and promotes mononuclear cells adhesion to endothelial cells.</title>
        <authorList>
            <person name="Gao Y."/>
            <person name="Meng D."/>
            <person name="Sun N."/>
            <person name="Zhu Z."/>
            <person name="Zhao R."/>
            <person name="Lu C."/>
            <person name="Chen S."/>
            <person name="Hua L."/>
            <person name="Qian R."/>
        </authorList>
    </citation>
    <scope>FUNCTION</scope>
</reference>
<reference key="56">
    <citation type="journal article" date="2014" name="Cell Rep.">
        <title>SRC-2 is an essential coactivator for orchestrating metabolism and circadian rhythm.</title>
        <authorList>
            <person name="Stashi E."/>
            <person name="Lanz R.B."/>
            <person name="Mao J."/>
            <person name="Michailidis G."/>
            <person name="Zhu B."/>
            <person name="Kettner N.M."/>
            <person name="Putluri N."/>
            <person name="Reineke E.L."/>
            <person name="Reineke L.C."/>
            <person name="Dasgupta S."/>
            <person name="Dean A."/>
            <person name="Stevenson C.R."/>
            <person name="Sivasubramanian N."/>
            <person name="Sreekumar A."/>
            <person name="Demayo F."/>
            <person name="York B."/>
            <person name="Fu L."/>
            <person name="O'Malley B.W."/>
        </authorList>
    </citation>
    <scope>INTERACTION WITH NCOA2</scope>
</reference>
<reference key="57">
    <citation type="journal article" date="2014" name="Genes Dev.">
        <title>CLOCK:BMAL1 is a pioneer-like transcription factor.</title>
        <authorList>
            <person name="Menet J.S."/>
            <person name="Pescatore S."/>
            <person name="Rosbash M."/>
        </authorList>
    </citation>
    <scope>FUNCTION</scope>
</reference>
<reference key="58">
    <citation type="journal article" date="2014" name="Hepatology">
        <title>CLOCK/BMAL1 regulates circadian change of mouse hepatic insulin sensitivity via SIRT1.</title>
        <authorList>
            <person name="Zhou B."/>
            <person name="Zhang Y."/>
            <person name="Zhang F."/>
            <person name="Xia Y."/>
            <person name="Liu J."/>
            <person name="Huang R."/>
            <person name="Wang Y."/>
            <person name="Hu Y."/>
            <person name="Wu J."/>
            <person name="Dai C."/>
            <person name="Wang H."/>
            <person name="Tu Y."/>
            <person name="Peng X."/>
            <person name="Wang Y."/>
            <person name="Zhai Q."/>
        </authorList>
    </citation>
    <scope>FUNCTION</scope>
</reference>
<reference key="59">
    <citation type="journal article" date="2014" name="J. Biol. Chem.">
        <title>Gene model 129 (Gm129) encodes a novel transcriptional repressor that modulates circadian gene expression.</title>
        <authorList>
            <person name="Annayev Y."/>
            <person name="Adar S."/>
            <person name="Chiou Y.Y."/>
            <person name="Lieb J."/>
            <person name="Sancar A."/>
            <person name="Ye R."/>
        </authorList>
    </citation>
    <scope>FUNCTION</scope>
</reference>
<reference key="60">
    <citation type="journal article" date="2014" name="Mol. Cell. Endocrinol.">
        <title>Modulation of glucocorticoid receptor induction properties by core circadian clock proteins.</title>
        <authorList>
            <person name="Han D.H."/>
            <person name="Lee Y.J."/>
            <person name="Kim K."/>
            <person name="Kim C.J."/>
            <person name="Cho S."/>
        </authorList>
    </citation>
    <scope>FUNCTION IN GR REPRESSION</scope>
</reference>
<reference key="61">
    <citation type="journal article" date="2014" name="Trends Cell Biol.">
        <title>Molecular architecture of the mammalian circadian clock.</title>
        <authorList>
            <person name="Partch C.L."/>
            <person name="Green C.B."/>
            <person name="Takahashi J.S."/>
        </authorList>
    </citation>
    <scope>REVIEW</scope>
</reference>
<reference key="62">
    <citation type="journal article" date="2017" name="Mol. Cell">
        <title>CLOCK acetylates ASS1 to drive circadian rhythm of ureagenesis.</title>
        <authorList>
            <person name="Lin R."/>
            <person name="Mo Y."/>
            <person name="Zha H."/>
            <person name="Qu Z."/>
            <person name="Xie P."/>
            <person name="Zhu Z.J."/>
            <person name="Xu Y."/>
            <person name="Xiong Y."/>
            <person name="Guan K.L."/>
        </authorList>
    </citation>
    <scope>FUNCTION</scope>
    <scope>INTERACTION WITH ASS1</scope>
</reference>
<reference key="63">
    <citation type="journal article" date="2017" name="Oncotarget">
        <title>Cancer/testis antigen PIWIL2 suppresses circadian rhythms by regulating the stability and activity of BMAL1 and CLOCK.</title>
        <authorList>
            <person name="Lu Y."/>
            <person name="Zheng X."/>
            <person name="Hu W."/>
            <person name="Bian S."/>
            <person name="Zhang Z."/>
            <person name="Tao D."/>
            <person name="Liu Y."/>
            <person name="Ma Y."/>
        </authorList>
    </citation>
    <scope>INTERACTION WITH PIWIL2</scope>
    <scope>TISSUE SPECIFICITY</scope>
</reference>
<reference key="64">
    <citation type="journal article" date="2018" name="Cell Metab.">
        <title>Autophagy regulates the liver clock and glucose metabolism by degrading CRY1.</title>
        <authorList>
            <person name="Toledo M."/>
            <person name="Batista-Gonzalez A."/>
            <person name="Merheb E."/>
            <person name="Aoun M.L."/>
            <person name="Tarabra E."/>
            <person name="Feng D."/>
            <person name="Sarparanta J."/>
            <person name="Merlo P."/>
            <person name="Botre F."/>
            <person name="Schwartz G.J."/>
            <person name="Pessin J.E."/>
            <person name="Singh R."/>
        </authorList>
    </citation>
    <scope>LYSOSOME-MEDIATED DEGRADATION</scope>
</reference>
<reference key="65">
    <citation type="journal article" date="2018" name="Hypertension">
        <title>Dec1 and CLOCK regulate Na+/K+-ATPase beta1 subunit expression and blood pressure.</title>
        <authorList>
            <person name="Nakashima A."/>
            <person name="Kawamoto T."/>
            <person name="Noshiro M."/>
            <person name="Ueno T."/>
            <person name="Doi S."/>
            <person name="Honda K."/>
            <person name="Maruhashi T."/>
            <person name="Noma K."/>
            <person name="Honma S."/>
            <person name="Masaki T."/>
            <person name="Higashi Y."/>
            <person name="Kato Y."/>
        </authorList>
    </citation>
    <scope>FUNCTION</scope>
</reference>
<reference key="66">
    <citation type="journal article" date="2012" name="Science">
        <title>Crystal structure of the heterodimeric CLOCK:BMAL1 transcriptional activator complex.</title>
        <authorList>
            <person name="Huang N."/>
            <person name="Chelliah Y."/>
            <person name="Shan Y."/>
            <person name="Taylor C.A."/>
            <person name="Yoo S.H."/>
            <person name="Partch C."/>
            <person name="Green C.B."/>
            <person name="Zhang H."/>
            <person name="Takahashi J.S."/>
        </authorList>
    </citation>
    <scope>X-RAY CRYSTALLOGRAPHY (2.27 ANGSTROMS) OF 26-384 IN COMPLEX WITH BMAL1</scope>
    <scope>FUNCTION</scope>
    <scope>INTERACTION WITH BMAL1</scope>
    <scope>MUTAGENESIS OF LEU-57; LEU-74 AND TRP-284</scope>
</reference>
<evidence type="ECO:0000250" key="1">
    <source>
        <dbReference type="UniProtKB" id="O15516"/>
    </source>
</evidence>
<evidence type="ECO:0000255" key="2">
    <source>
        <dbReference type="PROSITE-ProRule" id="PRU00140"/>
    </source>
</evidence>
<evidence type="ECO:0000255" key="3">
    <source>
        <dbReference type="PROSITE-ProRule" id="PRU00981"/>
    </source>
</evidence>
<evidence type="ECO:0000256" key="4">
    <source>
        <dbReference type="SAM" id="MobiDB-lite"/>
    </source>
</evidence>
<evidence type="ECO:0000269" key="5">
    <source>
    </source>
</evidence>
<evidence type="ECO:0000269" key="6">
    <source>
    </source>
</evidence>
<evidence type="ECO:0000269" key="7">
    <source>
    </source>
</evidence>
<evidence type="ECO:0000269" key="8">
    <source>
    </source>
</evidence>
<evidence type="ECO:0000269" key="9">
    <source>
    </source>
</evidence>
<evidence type="ECO:0000269" key="10">
    <source>
    </source>
</evidence>
<evidence type="ECO:0000269" key="11">
    <source>
    </source>
</evidence>
<evidence type="ECO:0000269" key="12">
    <source>
    </source>
</evidence>
<evidence type="ECO:0000269" key="13">
    <source>
    </source>
</evidence>
<evidence type="ECO:0000269" key="14">
    <source>
    </source>
</evidence>
<evidence type="ECO:0000269" key="15">
    <source>
    </source>
</evidence>
<evidence type="ECO:0000269" key="16">
    <source>
    </source>
</evidence>
<evidence type="ECO:0000269" key="17">
    <source>
    </source>
</evidence>
<evidence type="ECO:0000269" key="18">
    <source>
    </source>
</evidence>
<evidence type="ECO:0000269" key="19">
    <source>
    </source>
</evidence>
<evidence type="ECO:0000269" key="20">
    <source>
    </source>
</evidence>
<evidence type="ECO:0000269" key="21">
    <source>
    </source>
</evidence>
<evidence type="ECO:0000269" key="22">
    <source>
    </source>
</evidence>
<evidence type="ECO:0000269" key="23">
    <source>
    </source>
</evidence>
<evidence type="ECO:0000269" key="24">
    <source>
    </source>
</evidence>
<evidence type="ECO:0000269" key="25">
    <source>
    </source>
</evidence>
<evidence type="ECO:0000269" key="26">
    <source>
    </source>
</evidence>
<evidence type="ECO:0000269" key="27">
    <source>
    </source>
</evidence>
<evidence type="ECO:0000269" key="28">
    <source>
    </source>
</evidence>
<evidence type="ECO:0000269" key="29">
    <source>
    </source>
</evidence>
<evidence type="ECO:0000269" key="30">
    <source>
    </source>
</evidence>
<evidence type="ECO:0000269" key="31">
    <source>
    </source>
</evidence>
<evidence type="ECO:0000269" key="32">
    <source>
    </source>
</evidence>
<evidence type="ECO:0000269" key="33">
    <source>
    </source>
</evidence>
<evidence type="ECO:0000269" key="34">
    <source>
    </source>
</evidence>
<evidence type="ECO:0000269" key="35">
    <source>
    </source>
</evidence>
<evidence type="ECO:0000269" key="36">
    <source>
    </source>
</evidence>
<evidence type="ECO:0000269" key="37">
    <source>
    </source>
</evidence>
<evidence type="ECO:0000269" key="38">
    <source>
    </source>
</evidence>
<evidence type="ECO:0000269" key="39">
    <source>
    </source>
</evidence>
<evidence type="ECO:0000269" key="40">
    <source>
    </source>
</evidence>
<evidence type="ECO:0000269" key="41">
    <source>
    </source>
</evidence>
<evidence type="ECO:0000269" key="42">
    <source>
    </source>
</evidence>
<evidence type="ECO:0000269" key="43">
    <source>
    </source>
</evidence>
<evidence type="ECO:0000269" key="44">
    <source>
    </source>
</evidence>
<evidence type="ECO:0000269" key="45">
    <source>
    </source>
</evidence>
<evidence type="ECO:0000269" key="46">
    <source>
    </source>
</evidence>
<evidence type="ECO:0000269" key="47">
    <source>
    </source>
</evidence>
<evidence type="ECO:0000269" key="48">
    <source>
    </source>
</evidence>
<evidence type="ECO:0000269" key="49">
    <source>
    </source>
</evidence>
<evidence type="ECO:0000269" key="50">
    <source>
    </source>
</evidence>
<evidence type="ECO:0000269" key="51">
    <source>
    </source>
</evidence>
<evidence type="ECO:0000269" key="52">
    <source>
    </source>
</evidence>
<evidence type="ECO:0000269" key="53">
    <source>
    </source>
</evidence>
<evidence type="ECO:0000269" key="54">
    <source>
    </source>
</evidence>
<evidence type="ECO:0000269" key="55">
    <source>
    </source>
</evidence>
<evidence type="ECO:0000269" key="56">
    <source>
    </source>
</evidence>
<evidence type="ECO:0000269" key="57">
    <source>
    </source>
</evidence>
<evidence type="ECO:0000269" key="58">
    <source>
    </source>
</evidence>
<evidence type="ECO:0000269" key="59">
    <source>
    </source>
</evidence>
<evidence type="ECO:0000269" key="60">
    <source>
    </source>
</evidence>
<evidence type="ECO:0000269" key="61">
    <source>
    </source>
</evidence>
<evidence type="ECO:0000269" key="62">
    <source>
    </source>
</evidence>
<evidence type="ECO:0000269" key="63">
    <source>
    </source>
</evidence>
<evidence type="ECO:0000303" key="64">
    <source>
    </source>
</evidence>
<evidence type="ECO:0007744" key="65">
    <source>
    </source>
</evidence>
<evidence type="ECO:0007829" key="66">
    <source>
        <dbReference type="PDB" id="4F3L"/>
    </source>
</evidence>
<evidence type="ECO:0007829" key="67">
    <source>
        <dbReference type="PDB" id="5VJI"/>
    </source>
</evidence>
<accession>O08785</accession>
<dbReference type="EC" id="2.3.1.48"/>
<dbReference type="EMBL" id="AF000998">
    <property type="protein sequence ID" value="AAC53200.1"/>
    <property type="molecule type" value="mRNA"/>
</dbReference>
<dbReference type="EMBL" id="AF146793">
    <property type="protein sequence ID" value="AAD30565.1"/>
    <property type="molecule type" value="Genomic_DNA"/>
</dbReference>
<dbReference type="CCDS" id="CCDS19360.1">
    <molecule id="O08785-1"/>
</dbReference>
<dbReference type="RefSeq" id="NP_001276755.1">
    <molecule id="O08785-1"/>
    <property type="nucleotide sequence ID" value="NM_001289826.2"/>
</dbReference>
<dbReference type="RefSeq" id="NP_001415407.1">
    <molecule id="O08785-2"/>
    <property type="nucleotide sequence ID" value="NM_001428478.1"/>
</dbReference>
<dbReference type="RefSeq" id="NP_001415408.1">
    <molecule id="O08785-2"/>
    <property type="nucleotide sequence ID" value="NM_001428479.1"/>
</dbReference>
<dbReference type="RefSeq" id="NP_031741.1">
    <molecule id="O08785-1"/>
    <property type="nucleotide sequence ID" value="NM_007715.7"/>
</dbReference>
<dbReference type="RefSeq" id="XP_017176137.1">
    <molecule id="O08785-1"/>
    <property type="nucleotide sequence ID" value="XM_017320648.3"/>
</dbReference>
<dbReference type="RefSeq" id="XP_017176139.1">
    <property type="nucleotide sequence ID" value="XM_017320650.1"/>
</dbReference>
<dbReference type="RefSeq" id="XP_030109961.1">
    <molecule id="O08785-1"/>
    <property type="nucleotide sequence ID" value="XM_030254101.2"/>
</dbReference>
<dbReference type="RefSeq" id="XP_030109962.1">
    <molecule id="O08785-1"/>
    <property type="nucleotide sequence ID" value="XM_030254102.2"/>
</dbReference>
<dbReference type="PDB" id="4F3L">
    <property type="method" value="X-ray"/>
    <property type="resolution" value="2.27 A"/>
    <property type="chains" value="A=26-384"/>
</dbReference>
<dbReference type="PDB" id="5VJI">
    <property type="method" value="X-ray"/>
    <property type="resolution" value="1.86 A"/>
    <property type="chains" value="A/B/D/E=516-560"/>
</dbReference>
<dbReference type="PDB" id="5VJX">
    <property type="method" value="X-ray"/>
    <property type="resolution" value="2.69 A"/>
    <property type="chains" value="B/C/E/F/H/I/K/L/N/O/S/T/V/W/Y/Z/b/c/e/f=515-560"/>
</dbReference>
<dbReference type="PDB" id="8OSJ">
    <property type="method" value="EM"/>
    <property type="resolution" value="6.20 A"/>
    <property type="chains" value="M=26-395"/>
</dbReference>
<dbReference type="PDB" id="8OSK">
    <property type="method" value="EM"/>
    <property type="resolution" value="3.60 A"/>
    <property type="chains" value="M=26-395"/>
</dbReference>
<dbReference type="PDB" id="8OSL">
    <property type="method" value="EM"/>
    <property type="resolution" value="4.90 A"/>
    <property type="chains" value="M/O=26-395"/>
</dbReference>
<dbReference type="PDBsum" id="4F3L"/>
<dbReference type="PDBsum" id="5VJI"/>
<dbReference type="PDBsum" id="5VJX"/>
<dbReference type="PDBsum" id="8OSJ"/>
<dbReference type="PDBsum" id="8OSK"/>
<dbReference type="PDBsum" id="8OSL"/>
<dbReference type="EMDB" id="EMD-17155"/>
<dbReference type="EMDB" id="EMD-17157"/>
<dbReference type="EMDB" id="EMD-17160"/>
<dbReference type="SMR" id="O08785"/>
<dbReference type="BioGRID" id="198756">
    <property type="interactions" value="31"/>
</dbReference>
<dbReference type="ComplexPortal" id="CPX-3225">
    <property type="entry name" value="CLOCK-BMAL1 transcription complex"/>
</dbReference>
<dbReference type="ComplexPortal" id="CPX-3228">
    <property type="entry name" value="CLOCK-BMAL2 transcription complex"/>
</dbReference>
<dbReference type="CORUM" id="O08785"/>
<dbReference type="DIP" id="DIP-30958N"/>
<dbReference type="FunCoup" id="O08785">
    <property type="interactions" value="3195"/>
</dbReference>
<dbReference type="IntAct" id="O08785">
    <property type="interactions" value="35"/>
</dbReference>
<dbReference type="MINT" id="O08785"/>
<dbReference type="STRING" id="10090.ENSMUSP00000143939"/>
<dbReference type="GlyGen" id="O08785">
    <property type="glycosylation" value="3 sites, 1 O-linked glycan (3 sites)"/>
</dbReference>
<dbReference type="iPTMnet" id="O08785"/>
<dbReference type="PhosphoSitePlus" id="O08785"/>
<dbReference type="PaxDb" id="10090-ENSMUSP00000074656"/>
<dbReference type="PeptideAtlas" id="O08785"/>
<dbReference type="ProteomicsDB" id="283858">
    <molecule id="O08785-1"/>
</dbReference>
<dbReference type="ProteomicsDB" id="283859">
    <molecule id="O08785-2"/>
</dbReference>
<dbReference type="Pumba" id="O08785"/>
<dbReference type="Antibodypedia" id="909">
    <property type="antibodies" value="532 antibodies from 41 providers"/>
</dbReference>
<dbReference type="DNASU" id="12753"/>
<dbReference type="Ensembl" id="ENSMUST00000075159.5">
    <molecule id="O08785-1"/>
    <property type="protein sequence ID" value="ENSMUSP00000074656.2"/>
    <property type="gene ID" value="ENSMUSG00000029238.12"/>
</dbReference>
<dbReference type="Ensembl" id="ENSMUST00000202651.4">
    <molecule id="O08785-1"/>
    <property type="protein sequence ID" value="ENSMUSP00000143939.2"/>
    <property type="gene ID" value="ENSMUSG00000029238.12"/>
</dbReference>
<dbReference type="GeneID" id="12753"/>
<dbReference type="KEGG" id="mmu:12753"/>
<dbReference type="UCSC" id="uc008xuq.3">
    <molecule id="O08785-1"/>
    <property type="organism name" value="mouse"/>
</dbReference>
<dbReference type="AGR" id="MGI:99698"/>
<dbReference type="CTD" id="9575"/>
<dbReference type="MGI" id="MGI:99698">
    <property type="gene designation" value="Clock"/>
</dbReference>
<dbReference type="VEuPathDB" id="HostDB:ENSMUSG00000029238"/>
<dbReference type="eggNOG" id="KOG3561">
    <property type="taxonomic scope" value="Eukaryota"/>
</dbReference>
<dbReference type="GeneTree" id="ENSGT00940000157580"/>
<dbReference type="InParanoid" id="O08785"/>
<dbReference type="OMA" id="HVPNSAH"/>
<dbReference type="OrthoDB" id="411251at2759"/>
<dbReference type="PhylomeDB" id="O08785"/>
<dbReference type="TreeFam" id="TF324568"/>
<dbReference type="BioGRID-ORCS" id="12753">
    <property type="hits" value="4 hits in 85 CRISPR screens"/>
</dbReference>
<dbReference type="ChiTaRS" id="Clock">
    <property type="organism name" value="mouse"/>
</dbReference>
<dbReference type="EvolutionaryTrace" id="O08785"/>
<dbReference type="PRO" id="PR:O08785"/>
<dbReference type="Proteomes" id="UP000000589">
    <property type="component" value="Chromosome 5"/>
</dbReference>
<dbReference type="RNAct" id="O08785">
    <property type="molecule type" value="protein"/>
</dbReference>
<dbReference type="Bgee" id="ENSMUSG00000029238">
    <property type="expression patterns" value="Expressed in pigmented layer of retina and 252 other cell types or tissues"/>
</dbReference>
<dbReference type="ExpressionAtlas" id="O08785">
    <property type="expression patterns" value="baseline and differential"/>
</dbReference>
<dbReference type="GO" id="GO:0033391">
    <property type="term" value="C:chromatoid body"/>
    <property type="evidence" value="ECO:0000314"/>
    <property type="project" value="UniProtKB"/>
</dbReference>
<dbReference type="GO" id="GO:0005694">
    <property type="term" value="C:chromosome"/>
    <property type="evidence" value="ECO:0007669"/>
    <property type="project" value="Ensembl"/>
</dbReference>
<dbReference type="GO" id="GO:1990513">
    <property type="term" value="C:CLOCK-BMAL transcription complex"/>
    <property type="evidence" value="ECO:0000353"/>
    <property type="project" value="ComplexPortal"/>
</dbReference>
<dbReference type="GO" id="GO:0005737">
    <property type="term" value="C:cytoplasm"/>
    <property type="evidence" value="ECO:0000314"/>
    <property type="project" value="UniProtKB"/>
</dbReference>
<dbReference type="GO" id="GO:0005829">
    <property type="term" value="C:cytosol"/>
    <property type="evidence" value="ECO:0000250"/>
    <property type="project" value="UniProtKB"/>
</dbReference>
<dbReference type="GO" id="GO:0005654">
    <property type="term" value="C:nucleoplasm"/>
    <property type="evidence" value="ECO:0000304"/>
    <property type="project" value="Reactome"/>
</dbReference>
<dbReference type="GO" id="GO:0005634">
    <property type="term" value="C:nucleus"/>
    <property type="evidence" value="ECO:0000314"/>
    <property type="project" value="UniProtKB"/>
</dbReference>
<dbReference type="GO" id="GO:0005667">
    <property type="term" value="C:transcription regulator complex"/>
    <property type="evidence" value="ECO:0000314"/>
    <property type="project" value="UniProtKB"/>
</dbReference>
<dbReference type="GO" id="GO:0031490">
    <property type="term" value="F:chromatin DNA binding"/>
    <property type="evidence" value="ECO:0000314"/>
    <property type="project" value="UniProtKB"/>
</dbReference>
<dbReference type="GO" id="GO:0003677">
    <property type="term" value="F:DNA binding"/>
    <property type="evidence" value="ECO:0000250"/>
    <property type="project" value="UniProtKB"/>
</dbReference>
<dbReference type="GO" id="GO:0001228">
    <property type="term" value="F:DNA-binding transcription activator activity, RNA polymerase II-specific"/>
    <property type="evidence" value="ECO:0000314"/>
    <property type="project" value="BHF-UCL"/>
</dbReference>
<dbReference type="GO" id="GO:0003700">
    <property type="term" value="F:DNA-binding transcription factor activity"/>
    <property type="evidence" value="ECO:0000314"/>
    <property type="project" value="UniProtKB"/>
</dbReference>
<dbReference type="GO" id="GO:0000981">
    <property type="term" value="F:DNA-binding transcription factor activity, RNA polymerase II-specific"/>
    <property type="evidence" value="ECO:0000314"/>
    <property type="project" value="BHF-UCL"/>
</dbReference>
<dbReference type="GO" id="GO:0070888">
    <property type="term" value="F:E-box binding"/>
    <property type="evidence" value="ECO:0000314"/>
    <property type="project" value="UniProtKB"/>
</dbReference>
<dbReference type="GO" id="GO:0004402">
    <property type="term" value="F:histone acetyltransferase activity"/>
    <property type="evidence" value="ECO:0000315"/>
    <property type="project" value="UniProtKB"/>
</dbReference>
<dbReference type="GO" id="GO:0046983">
    <property type="term" value="F:protein dimerization activity"/>
    <property type="evidence" value="ECO:0007669"/>
    <property type="project" value="InterPro"/>
</dbReference>
<dbReference type="GO" id="GO:0000978">
    <property type="term" value="F:RNA polymerase II cis-regulatory region sequence-specific DNA binding"/>
    <property type="evidence" value="ECO:0000314"/>
    <property type="project" value="UniProtKB"/>
</dbReference>
<dbReference type="GO" id="GO:0043565">
    <property type="term" value="F:sequence-specific DNA binding"/>
    <property type="evidence" value="ECO:0000314"/>
    <property type="project" value="UniProtKB"/>
</dbReference>
<dbReference type="GO" id="GO:0071479">
    <property type="term" value="P:cellular response to ionizing radiation"/>
    <property type="evidence" value="ECO:0007669"/>
    <property type="project" value="Ensembl"/>
</dbReference>
<dbReference type="GO" id="GO:0032922">
    <property type="term" value="P:circadian regulation of gene expression"/>
    <property type="evidence" value="ECO:0000315"/>
    <property type="project" value="UniProtKB"/>
</dbReference>
<dbReference type="GO" id="GO:0007623">
    <property type="term" value="P:circadian rhythm"/>
    <property type="evidence" value="ECO:0000314"/>
    <property type="project" value="MGI"/>
</dbReference>
<dbReference type="GO" id="GO:0000077">
    <property type="term" value="P:DNA damage checkpoint signaling"/>
    <property type="evidence" value="ECO:0007669"/>
    <property type="project" value="Ensembl"/>
</dbReference>
<dbReference type="GO" id="GO:0045892">
    <property type="term" value="P:negative regulation of DNA-templated transcription"/>
    <property type="evidence" value="ECO:0000314"/>
    <property type="project" value="UniProtKB"/>
</dbReference>
<dbReference type="GO" id="GO:2000323">
    <property type="term" value="P:negative regulation of nuclear receptor-mediated glucocorticoid signaling pathway"/>
    <property type="evidence" value="ECO:0000314"/>
    <property type="project" value="UniProtKB"/>
</dbReference>
<dbReference type="GO" id="GO:0042753">
    <property type="term" value="P:positive regulation of circadian rhythm"/>
    <property type="evidence" value="ECO:0000315"/>
    <property type="project" value="ComplexPortal"/>
</dbReference>
<dbReference type="GO" id="GO:0045893">
    <property type="term" value="P:positive regulation of DNA-templated transcription"/>
    <property type="evidence" value="ECO:0000314"/>
    <property type="project" value="UniProtKB"/>
</dbReference>
<dbReference type="GO" id="GO:0050729">
    <property type="term" value="P:positive regulation of inflammatory response"/>
    <property type="evidence" value="ECO:0000315"/>
    <property type="project" value="UniProtKB"/>
</dbReference>
<dbReference type="GO" id="GO:0051092">
    <property type="term" value="P:positive regulation of NF-kappaB transcription factor activity"/>
    <property type="evidence" value="ECO:0000315"/>
    <property type="project" value="UniProtKB"/>
</dbReference>
<dbReference type="GO" id="GO:0045944">
    <property type="term" value="P:positive regulation of transcription by RNA polymerase II"/>
    <property type="evidence" value="ECO:0000314"/>
    <property type="project" value="BHF-UCL"/>
</dbReference>
<dbReference type="GO" id="GO:0043161">
    <property type="term" value="P:proteasome-mediated ubiquitin-dependent protein catabolic process"/>
    <property type="evidence" value="ECO:0000314"/>
    <property type="project" value="UniProtKB"/>
</dbReference>
<dbReference type="GO" id="GO:0006473">
    <property type="term" value="P:protein acetylation"/>
    <property type="evidence" value="ECO:0000314"/>
    <property type="project" value="UniProtKB"/>
</dbReference>
<dbReference type="GO" id="GO:0042752">
    <property type="term" value="P:regulation of circadian rhythm"/>
    <property type="evidence" value="ECO:0000315"/>
    <property type="project" value="UniProtKB"/>
</dbReference>
<dbReference type="GO" id="GO:0006355">
    <property type="term" value="P:regulation of DNA-templated transcription"/>
    <property type="evidence" value="ECO:0000314"/>
    <property type="project" value="UniProtKB"/>
</dbReference>
<dbReference type="GO" id="GO:0042634">
    <property type="term" value="P:regulation of hair cycle"/>
    <property type="evidence" value="ECO:0000250"/>
    <property type="project" value="UniProtKB"/>
</dbReference>
<dbReference type="GO" id="GO:0050796">
    <property type="term" value="P:regulation of insulin secretion"/>
    <property type="evidence" value="ECO:0000315"/>
    <property type="project" value="UniProtKB"/>
</dbReference>
<dbReference type="GO" id="GO:2000074">
    <property type="term" value="P:regulation of type B pancreatic cell development"/>
    <property type="evidence" value="ECO:0000315"/>
    <property type="project" value="UniProtKB"/>
</dbReference>
<dbReference type="GO" id="GO:0051775">
    <property type="term" value="P:response to redox state"/>
    <property type="evidence" value="ECO:0000250"/>
    <property type="project" value="UniProtKB"/>
</dbReference>
<dbReference type="GO" id="GO:0007283">
    <property type="term" value="P:spermatogenesis"/>
    <property type="evidence" value="ECO:0000315"/>
    <property type="project" value="UniProtKB"/>
</dbReference>
<dbReference type="CDD" id="cd19734">
    <property type="entry name" value="bHLH-PAS_CLOCK"/>
    <property type="match status" value="1"/>
</dbReference>
<dbReference type="CDD" id="cd00130">
    <property type="entry name" value="PAS"/>
    <property type="match status" value="2"/>
</dbReference>
<dbReference type="DisProt" id="DP00734"/>
<dbReference type="FunFam" id="3.30.450.20:FF:000016">
    <property type="entry name" value="Circadian locomoter output cycles protein"/>
    <property type="match status" value="1"/>
</dbReference>
<dbReference type="FunFam" id="4.10.280.10:FF:000013">
    <property type="entry name" value="Circadian locomoter output cycles protein kaput"/>
    <property type="match status" value="1"/>
</dbReference>
<dbReference type="FunFam" id="3.30.450.20:FF:000022">
    <property type="entry name" value="circadian locomoter output cycles protein kaput"/>
    <property type="match status" value="1"/>
</dbReference>
<dbReference type="Gene3D" id="4.10.280.10">
    <property type="entry name" value="Helix-loop-helix DNA-binding domain"/>
    <property type="match status" value="1"/>
</dbReference>
<dbReference type="Gene3D" id="3.30.450.20">
    <property type="entry name" value="PAS domain"/>
    <property type="match status" value="2"/>
</dbReference>
<dbReference type="InterPro" id="IPR011598">
    <property type="entry name" value="bHLH_dom"/>
</dbReference>
<dbReference type="InterPro" id="IPR047230">
    <property type="entry name" value="CLOCK-like"/>
</dbReference>
<dbReference type="InterPro" id="IPR036638">
    <property type="entry name" value="HLH_DNA-bd_sf"/>
</dbReference>
<dbReference type="InterPro" id="IPR001067">
    <property type="entry name" value="Nuc_translocat"/>
</dbReference>
<dbReference type="InterPro" id="IPR001610">
    <property type="entry name" value="PAC"/>
</dbReference>
<dbReference type="InterPro" id="IPR000014">
    <property type="entry name" value="PAS"/>
</dbReference>
<dbReference type="InterPro" id="IPR035965">
    <property type="entry name" value="PAS-like_dom_sf"/>
</dbReference>
<dbReference type="InterPro" id="IPR013767">
    <property type="entry name" value="PAS_fold"/>
</dbReference>
<dbReference type="PANTHER" id="PTHR46055">
    <property type="entry name" value="CIRCADIAN LOCOMOTER OUTPUT CYCLES PROTEIN KAPUT"/>
    <property type="match status" value="1"/>
</dbReference>
<dbReference type="PANTHER" id="PTHR46055:SF2">
    <property type="entry name" value="CIRCADIAN LOCOMOTER OUTPUT CYCLES PROTEIN KAPUT"/>
    <property type="match status" value="1"/>
</dbReference>
<dbReference type="Pfam" id="PF00010">
    <property type="entry name" value="HLH"/>
    <property type="match status" value="1"/>
</dbReference>
<dbReference type="Pfam" id="PF00989">
    <property type="entry name" value="PAS"/>
    <property type="match status" value="1"/>
</dbReference>
<dbReference type="Pfam" id="PF14598">
    <property type="entry name" value="PAS_11"/>
    <property type="match status" value="1"/>
</dbReference>
<dbReference type="PRINTS" id="PR00785">
    <property type="entry name" value="NCTRNSLOCATR"/>
</dbReference>
<dbReference type="SMART" id="SM00353">
    <property type="entry name" value="HLH"/>
    <property type="match status" value="1"/>
</dbReference>
<dbReference type="SMART" id="SM00086">
    <property type="entry name" value="PAC"/>
    <property type="match status" value="1"/>
</dbReference>
<dbReference type="SMART" id="SM00091">
    <property type="entry name" value="PAS"/>
    <property type="match status" value="2"/>
</dbReference>
<dbReference type="SUPFAM" id="SSF47459">
    <property type="entry name" value="HLH, helix-loop-helix DNA-binding domain"/>
    <property type="match status" value="1"/>
</dbReference>
<dbReference type="SUPFAM" id="SSF55785">
    <property type="entry name" value="PYP-like sensor domain (PAS domain)"/>
    <property type="match status" value="2"/>
</dbReference>
<dbReference type="PROSITE" id="PS50888">
    <property type="entry name" value="BHLH"/>
    <property type="match status" value="1"/>
</dbReference>
<dbReference type="PROSITE" id="PS50112">
    <property type="entry name" value="PAS"/>
    <property type="match status" value="2"/>
</dbReference>
<comment type="function">
    <text evidence="1 6 9 10 14 15 16 21 22 23 25 27 28 29 30 32 34 37 38 39 40 41 43 46 48 51 52 53 54 55 56 59 61">Transcriptional activator which forms a core component of the circadian clock. The circadian clock, an internal time-keeping system, regulates various physiological processes through the generation of approximately 24 hour circadian rhythms in gene expression, which are translated into rhythms in metabolism and behavior. It is derived from the Latin roots 'circa' (about) and 'diem' (day) and acts as an important regulator of a wide array of physiological functions including metabolism, sleep, body temperature, blood pressure, endocrine, immune, cardiovascular, and renal function. Consists of two major components: the central clock, residing in the suprachiasmatic nucleus (SCN) of the brain, and the peripheral clocks that are present in nearly every tissue and organ system. Both the central and peripheral clocks can be reset by environmental cues, also known as Zeitgebers (German for 'timegivers'). The predominant Zeitgeber for the central clock is light, which is sensed by retina and signals directly to the SCN. The central clock entrains the peripheral clocks through neuronal and hormonal signals, body temperature and feeding-related cues, aligning all clocks with the external light/dark cycle. Circadian rhythms allow an organism to achieve temporal homeostasis with its environment at the molecular level by regulating gene expression to create a peak of protein expression once every 24 hours to control when a particular physiological process is most active with respect to the solar day. Transcription and translation of core clock components (CLOCK, NPAS2, BMAL1, BMAL2, PER1, PER2, PER3, CRY1 and CRY2) plays a critical role in rhythm generation, whereas delays imposed by post-translational modifications (PTMs) are important for determining the period (tau) of the rhythms (tau refers to the period of a rhythm and is the length, in time, of one complete cycle). A diurnal rhythm is synchronized with the day/night cycle, while the ultradian and infradian rhythms have a period shorter and longer than 24 hours, respectively. Disruptions in the circadian rhythms contribute to the pathology of cardiovascular diseases, cancer, metabolic syndromes and aging. A transcription/translation feedback loop (TTFL) forms the core of the molecular circadian clock mechanism. Transcription factors, CLOCK or NPAS2 and BMAL1 or BMAL2, form the positive limb of the feedback loop, act in the form of a heterodimer and activate the transcription of core clock genes and clock-controlled genes (involved in key metabolic processes), harboring E-box elements (5'-CACGTG-3') within their promoters. The core clock genes: PER1/2/3 and CRY1/2 which are transcriptional repressors form the negative limb of the feedback loop and interact with the CLOCK|NPAS2-BMAL1|BMAL2 heterodimer inhibiting its activity and thereby negatively regulating their own expression. This heterodimer also activates nuclear receptors NR1D1/2 and RORA/B/G, which form a second feedback loop and which activate and repress BMAL1 transcription, respectively. Regulates the circadian expression of ICAM1, VCAM1, CCL2, THPO and MPL and also acts as an enhancer of the transactivation potential of NF-kappaB. Plays an important role in the homeostatic regulation of sleep. The CLOCK-BMAL1 heterodimer regulates the circadian expression of SERPINE1/PAI1, VWF, B3, CCRN4L/NOC, NAMPT, DBP, MYOD1, PPARGC1A, PPARGC1B, SIRT1, GYS2, F7, NGFR, GNRHR, BHLHE40/DEC1, ATF4, MTA1, KLF10 and also genes implicated in glucose and lipid metabolism. Promotes rhythmic chromatin opening, regulating the DNA accessibility of other transcription factors. May play a role in spermatogenesis; contributes to the chromatoid body assembly and physiology. The CLOCK-BMAL2 heterodimer activates the transcription of SERPINE1/PAI1 and BHLHE40/DEC1. The preferred binding motif for the CLOCK-BMAL1 heterodimer is 5'-CACGTGA-3', which contains a flanking adenine nucleotide at the 3-prime end of the canonical 6-nucleotide E-box sequence (By similarity). CLOCK specifically binds to the half-site 5'-CAC-3', while BMAL1 binds to the half-site 5'-GTGA-3' (By similarity). The CLOCK-BMAL1 heterodimer also recognizes the non-canonical E-box motifs 5'-AACGTGA-3' and 5'-CATGTGA-3'. CLOCK has an intrinsic acetyltransferase activity, which enables circadian chromatin remodeling by acetylating histones and nonhistone proteins, including its own partner BMAL1. Represses glucocorticoid receptor NR3C1/GR-induced transcriptional activity by reducing the association of NR3C1/GR to glucocorticoid response elements (GREs) via the acetylation of multiple lysine residues located in its hinge region. The acetyltransferase activity of CLOCK is as important as its transcription activity in circadian control. Acetylates metabolic enzymes IMPDH2 and NDUFA9 in a circadian manner (By similarity). Facilitated by BMAL1, rhythmically interacts and acetylates argininosuccinate synthase 1 (ASS1) leading to enzymatic inhibition of ASS1 as well as the circadian oscillation of arginine biosynthesis and subsequent ureagenesis (PubMed:28985504). Drives the circadian rhythm of blood pressure through transcriptional activation of ATP1B1 (PubMed:30012868).</text>
</comment>
<comment type="catalytic activity">
    <reaction evidence="10">
        <text>L-lysyl-[protein] + acetyl-CoA = N(6)-acetyl-L-lysyl-[protein] + CoA + H(+)</text>
        <dbReference type="Rhea" id="RHEA:45948"/>
        <dbReference type="Rhea" id="RHEA-COMP:9752"/>
        <dbReference type="Rhea" id="RHEA-COMP:10731"/>
        <dbReference type="ChEBI" id="CHEBI:15378"/>
        <dbReference type="ChEBI" id="CHEBI:29969"/>
        <dbReference type="ChEBI" id="CHEBI:57287"/>
        <dbReference type="ChEBI" id="CHEBI:57288"/>
        <dbReference type="ChEBI" id="CHEBI:61930"/>
        <dbReference type="EC" id="2.3.1.48"/>
    </reaction>
</comment>
<comment type="subunit">
    <text evidence="1 5 7 11 12 13 17 18 19 20 21 26 31 33 36 38 39 40 42 44 47 48 49 50 57 58 59 63">Component of the circadian clock oscillator which includes the CRY proteins, CLOCK or NPAS2, BMAL1 or BMAL2, CSNK1D and/or CSNK1E, TIMELESS and the PER proteins (PubMed:11779462). Forms a heterodimer with BMAL1 (PubMed:12897057, PubMed:16717091, PubMed:16980631, PubMed:18662546, PubMed:19946213, PubMed:22653727, PubMed:9616112). The CLOCK-BMAL1 heterodimer is required for E-box-dependent transactivation, for CLOCK nuclear translocation and degradation, and for phosphorylation of both CLOCK and BMAL1 (PubMed:12897057). Interacts with NR3C1 in a ligand-dependent fashion (PubMed:19141540). Interacts with ESR1 and estrogen stimulates this interaction (By similarity). Interacts with the complex p35/CDK5 (PubMed:24235147). Interacts with RELA/p65 (PubMed:22895791). Interacts with KAT2B, CREBBP and EP300 (By similarity). Interacts with ID1 and ID3 (PubMed:20861012). Interacts with ID2 (PubMed:20861012). Interacts with MTA1 (PubMed:24089055). Interacts with OGA (PubMed:23395175). Interacts with SIRT1 (PubMed:18662546, PubMed:18662547). Interacts with CIPC (PubMed:17310242). Interacts with EZH2 (PubMed:16717091). Interacts with EIF4E, PIWIL1 and DDX4 (PubMed:22900038). Interacts with PER1, PER2, CRY1 and CRY2 and this interaction requires a translocation to the nucleus (PubMed:16717091, PubMed:18430226, PubMed:18662546). Interaction of the CLOCK-BMAL1 heterodimer with PER or CRY inhibits transcription activation. Interaction of the CLOCK-BMAL1 with CRY1 is independent of DNA but with PER2 is off DNA (By similarity). The CLOCK-BMAL1 heterodimer interacts with GSK3B (PubMed:19946213). Interacts with KDM5A (PubMed:21960634). Interacts with KMT2A; in a circadian manner (PubMed:21113167). Interacts with MYBBP1A (PubMed:19129230). Interacts with THRAP3 (PubMed:24043798). Interacts with MED1; this interaction requires the presence of THRAP3 (PubMed:24043798). Interacts with NCOA2 (PubMed:24529706). The CLOCK-BMAL1 heterodimer interacts with PASD1. Interacts with NDUFA9. Interacts with IMPDH2; in a circadian manner (By similarity). Interacts with ASS1; in a circadian manner (PubMed:28985504). Interacts with PIWIL2 (via PIWI domain) (PubMed:28903391). Interacts with HNF4A (By similarity).</text>
</comment>
<comment type="interaction">
    <interactant intactId="EBI-79859">
        <id>O08785</id>
    </interactant>
    <interactant intactId="EBI-644534">
        <id>Q9WTL8</id>
        <label>Bmal1</label>
    </interactant>
    <organismsDiffer>false</organismsDiffer>
    <experiments>39</experiments>
</comment>
<comment type="interaction">
    <interactant intactId="EBI-79859">
        <id>O08785</id>
    </interactant>
    <interactant intactId="EBI-644559">
        <id>Q9WTL8-2</id>
        <label>Bmal1</label>
    </interactant>
    <organismsDiffer>false</organismsDiffer>
    <experiments>2</experiments>
</comment>
<comment type="interaction">
    <interactant intactId="EBI-79859">
        <id>O08785</id>
    </interactant>
    <interactant intactId="EBI-644568">
        <id>Q9WTL8-4</id>
        <label>Bmal1</label>
    </interactant>
    <organismsDiffer>false</organismsDiffer>
    <experiments>10</experiments>
</comment>
<comment type="interaction">
    <interactant intactId="EBI-79859">
        <id>O08785</id>
    </interactant>
    <interactant intactId="EBI-1266607">
        <id>P97784</id>
        <label>Cry1</label>
    </interactant>
    <organismsDiffer>false</organismsDiffer>
    <experiments>10</experiments>
</comment>
<comment type="interaction">
    <interactant intactId="EBI-79859">
        <id>O08785</id>
    </interactant>
    <interactant intactId="EBI-771709">
        <id>Q9JMK2</id>
        <label>Csnk1e</label>
    </interactant>
    <organismsDiffer>false</organismsDiffer>
    <experiments>2</experiments>
</comment>
<comment type="interaction">
    <interactant intactId="EBI-79859">
        <id>O08785</id>
    </interactant>
    <interactant intactId="EBI-2552275">
        <id>Q3U1J4</id>
        <label>Ddb1</label>
    </interactant>
    <organismsDiffer>false</organismsDiffer>
    <experiments>4</experiments>
</comment>
<comment type="interaction">
    <interactant intactId="EBI-79859">
        <id>O08785</id>
    </interactant>
    <interactant intactId="EBI-1266779">
        <id>O54943</id>
        <label>Per2</label>
    </interactant>
    <organismsDiffer>false</organismsDiffer>
    <experiments>10</experiments>
</comment>
<comment type="interaction">
    <interactant intactId="EBI-79859">
        <id>O08785</id>
    </interactant>
    <interactant intactId="EBI-6976815">
        <id>P20444</id>
        <label>Prkca</label>
    </interactant>
    <organismsDiffer>false</organismsDiffer>
    <experiments>3</experiments>
</comment>
<comment type="interaction">
    <interactant intactId="EBI-79859">
        <id>O08785</id>
    </interactant>
    <interactant intactId="EBI-1802585">
        <id>Q923E4</id>
        <label>Sirt1</label>
    </interactant>
    <organismsDiffer>false</organismsDiffer>
    <experiments>11</experiments>
</comment>
<comment type="interaction">
    <interactant intactId="EBI-79859">
        <id>O08785</id>
    </interactant>
    <interactant intactId="EBI-348169">
        <id>P67870</id>
        <label>CSNK2B</label>
    </interactant>
    <organismsDiffer>true</organismsDiffer>
    <experiments>2</experiments>
</comment>
<comment type="interaction">
    <interactant intactId="EBI-79859">
        <id>O08785</id>
    </interactant>
    <interactant intactId="EBI-591370">
        <id>Q03164</id>
        <label>KMT2A</label>
    </interactant>
    <organismsDiffer>true</organismsDiffer>
    <experiments>3</experiments>
</comment>
<comment type="interaction">
    <interactant intactId="EBI-79859">
        <id>O08785</id>
    </interactant>
    <interactant intactId="EBI-6144053">
        <id>Q14995</id>
        <label>NR1D2</label>
    </interactant>
    <organismsDiffer>true</organismsDiffer>
    <experiments>2</experiments>
</comment>
<comment type="interaction">
    <interactant intactId="EBI-79859">
        <id>O08785</id>
    </interactant>
    <interactant intactId="EBI-357253">
        <id>P62136</id>
        <label>PPP1CA</label>
    </interactant>
    <organismsDiffer>true</organismsDiffer>
    <experiments>2</experiments>
</comment>
<comment type="interaction">
    <interactant intactId="EBI-79859">
        <id>O08785</id>
    </interactant>
    <interactant intactId="EBI-352350">
        <id>P62140</id>
        <label>PPP1CB</label>
    </interactant>
    <organismsDiffer>true</organismsDiffer>
    <experiments>2</experiments>
</comment>
<comment type="interaction">
    <interactant intactId="EBI-79859">
        <id>O08785</id>
    </interactant>
    <interactant intactId="EBI-356283">
        <id>P36873</id>
        <label>PPP1CC</label>
    </interactant>
    <organismsDiffer>true</organismsDiffer>
    <experiments>2</experiments>
</comment>
<comment type="interaction">
    <interactant intactId="EBI-79859">
        <id>O08785</id>
    </interactant>
    <interactant intactId="EBI-357094">
        <id>P30154</id>
        <label>PPP2R1B</label>
    </interactant>
    <organismsDiffer>true</organismsDiffer>
    <experiments>2</experiments>
</comment>
<comment type="interaction">
    <interactant intactId="EBI-79859">
        <id>O08785</id>
    </interactant>
    <interactant intactId="EBI-396563">
        <id>Q14738</id>
        <label>PPP2R5D</label>
    </interactant>
    <organismsDiffer>true</organismsDiffer>
    <experiments>2</experiments>
</comment>
<comment type="interaction">
    <interactant intactId="EBI-79859">
        <id>O08785</id>
    </interactant>
    <interactant intactId="EBI-6144615">
        <id>Q92753</id>
        <label>RORB</label>
    </interactant>
    <organismsDiffer>true</organismsDiffer>
    <experiments>2</experiments>
</comment>
<comment type="interaction">
    <interactant intactId="EBI-79859">
        <id>O08785</id>
    </interactant>
    <interactant intactId="EBI-3908771">
        <id>P51449</id>
        <label>RORC</label>
    </interactant>
    <organismsDiffer>true</organismsDiffer>
    <experiments>2</experiments>
</comment>
<comment type="subcellular location">
    <subcellularLocation>
        <location evidence="5 7 12 13 18 24">Nucleus</location>
    </subcellularLocation>
    <subcellularLocation>
        <location evidence="7 12">Cytoplasm</location>
    </subcellularLocation>
    <subcellularLocation>
        <location evidence="1">Cytoplasm</location>
        <location evidence="1">Cytosol</location>
    </subcellularLocation>
    <text evidence="1 5 12 31">Localizes to sites of DNA damage in a H2AX-independent manner (By similarity). Shuttling between the cytoplasm and the nucleus is under circadian regulation and is BMAL1-dependent. Phosphorylated form located in the nucleus predominantly between CT12 and CT21. Nonphosphorylated form found only in the cytoplasm. Sequestered to the cytoplasm in the presence of ID2.</text>
</comment>
<comment type="alternative products">
    <event type="alternative splicing"/>
    <isoform>
        <id>O08785-1</id>
        <name>Long</name>
        <sequence type="displayed"/>
    </isoform>
    <isoform>
        <id>O08785-2</id>
        <name>Short</name>
        <sequence type="described" ref="VSP_002103"/>
    </isoform>
</comment>
<comment type="tissue specificity">
    <text evidence="40 49 58 62">Expressed equally in brain, eye, testes, ovaries, liver, heart, lung, kidney. In the brain, expression is abundant in the suprachiasmatic nuclei (SCN), in the pyriform cortex, and in the hippocampus. Low expression throughout the rest of the brain. Expression does not appear to undergo circadian oscillations.</text>
</comment>
<comment type="induction">
    <text evidence="5 7 8">In the SCN, nuclear expression is lowest between CT7 and CT13. Cytoplasmic expression is highest at these times. In liver, peak levels from CT21 to CT3. Expression of both phosphorylated and unphosphorylated forms of BMAL1 with other circadian clock proteins occurs between CT15 and CT18. Expression in the heart oscillates in a circadian manner.</text>
</comment>
<comment type="domain">
    <text>Contains a Gln-rich C-terminal domain which could correspond to the transactivation domain.</text>
</comment>
<comment type="PTM">
    <text evidence="12">Ubiquitinated, leading to its proteasomal degradation.</text>
</comment>
<comment type="PTM">
    <text evidence="44 45">O-glycosylated; contains O-GlcNAc. O-glycosylation by OGT prevents protein degradation by inhibiting ubiquitination. It also stabilizes the CLOCK-BMAL1 heterodimer thereby increasing CLOCK-BMAL1-mediated transcriptional activation of PER1/2/3 and CRY1/2.</text>
</comment>
<comment type="PTM">
    <text evidence="5 7 24 26 35 50">Phosphorylation is dependent on the CLOCK-BMAL1 heterodimer formation. Phosphorylation enhances the transcriptional activity, alters the subcellular localization and decreases the stability of the heterodimer by promoting its degradation. Phosphorylation shows circadian variations in the liver: the hyperphosphorylated form peaks at midnight (CT18), while the hypophosphorylated form is abundant throughout the day. May be phosphorylated by CSNK1D and CKSN1E.</text>
</comment>
<comment type="PTM">
    <text evidence="42">Sumoylation enhances its transcriptional activity and interaction with ESR1, resulting in up-regulation of ESR1 activity. Estrogen stimulates sumoylation. Desumoylation by SENP1 negatively regulates its transcriptional activity.</text>
</comment>
<comment type="PTM">
    <text evidence="60">Undergoes lysosome-mediated degradation in a time-dependent manner in the liver.</text>
</comment>
<comment type="polymorphism">
    <text evidence="62">The naturally-occurring CLOCK variant, missing exon 19 (deletion of AA 514-564) due to an A--&gt;T nucleotide transversion in a splice donor site, forms a heterodimer with DNA, but fails to activate transcription. Homozygous CLOCK mutants have a circadian rhythm that is increased from 3 to 4 hours and usually the circadian rhythmicity is lost at constant darkness. Expression of CLOCK is also reduced. There also exists an alternative spliced CLOCK variant missing both exon 18 and exon 19 (AA 484-564).</text>
</comment>
<feature type="chain" id="PRO_0000127164" description="Circadian locomoter output cycles protein kaput">
    <location>
        <begin position="1"/>
        <end position="855"/>
    </location>
</feature>
<feature type="domain" description="bHLH" evidence="3">
    <location>
        <begin position="34"/>
        <end position="84"/>
    </location>
</feature>
<feature type="domain" description="PAS 1" evidence="2">
    <location>
        <begin position="107"/>
        <end position="177"/>
    </location>
</feature>
<feature type="domain" description="PAS 2" evidence="2">
    <location>
        <begin position="262"/>
        <end position="332"/>
    </location>
</feature>
<feature type="domain" description="PAC">
    <location>
        <begin position="336"/>
        <end position="379"/>
    </location>
</feature>
<feature type="region of interest" description="Interaction with NR3C1" evidence="21">
    <location>
        <begin position="371"/>
        <end position="854"/>
    </location>
</feature>
<feature type="region of interest" description="Disordered" evidence="4">
    <location>
        <begin position="392"/>
        <end position="411"/>
    </location>
</feature>
<feature type="region of interest" description="Disordered" evidence="4">
    <location>
        <begin position="420"/>
        <end position="497"/>
    </location>
</feature>
<feature type="region of interest" description="Interaction with SIRT1" evidence="19">
    <location>
        <begin position="450"/>
        <end position="570"/>
    </location>
</feature>
<feature type="region of interest" description="Implicated in the circadian rhythmicity">
    <location>
        <begin position="514"/>
        <end position="564"/>
    </location>
</feature>
<feature type="region of interest" description="Disordered" evidence="4">
    <location>
        <begin position="613"/>
        <end position="650"/>
    </location>
</feature>
<feature type="region of interest" description="Disordered" evidence="4">
    <location>
        <begin position="752"/>
        <end position="791"/>
    </location>
</feature>
<feature type="region of interest" description="Disordered" evidence="4">
    <location>
        <begin position="814"/>
        <end position="855"/>
    </location>
</feature>
<feature type="short sequence motif" description="Nuclear localization signal" evidence="24">
    <location>
        <begin position="32"/>
        <end position="47"/>
    </location>
</feature>
<feature type="compositionally biased region" description="Polar residues" evidence="4">
    <location>
        <begin position="447"/>
        <end position="463"/>
    </location>
</feature>
<feature type="compositionally biased region" description="Low complexity" evidence="4">
    <location>
        <begin position="478"/>
        <end position="493"/>
    </location>
</feature>
<feature type="compositionally biased region" description="Low complexity" evidence="4">
    <location>
        <begin position="619"/>
        <end position="650"/>
    </location>
</feature>
<feature type="compositionally biased region" description="Low complexity" evidence="4">
    <location>
        <begin position="818"/>
        <end position="837"/>
    </location>
</feature>
<feature type="compositionally biased region" description="Polar residues" evidence="4">
    <location>
        <begin position="846"/>
        <end position="855"/>
    </location>
</feature>
<feature type="site" description="Interaction with E-box DNA" evidence="1">
    <location>
        <position position="39"/>
    </location>
</feature>
<feature type="site" description="Interaction with E-box DNA" evidence="1">
    <location>
        <position position="43"/>
    </location>
</feature>
<feature type="site" description="Interaction with E-box DNA" evidence="1">
    <location>
        <position position="47"/>
    </location>
</feature>
<feature type="site" description="Important for interaction with BMAL1" evidence="1">
    <location>
        <position position="84"/>
    </location>
</feature>
<feature type="modified residue" description="Phosphoserine" evidence="24">
    <location>
        <position position="38"/>
    </location>
</feature>
<feature type="modified residue" description="Phosphoserine" evidence="24">
    <location>
        <position position="42"/>
    </location>
</feature>
<feature type="modified residue" description="Phosphoserine" evidence="65">
    <location>
        <position position="408"/>
    </location>
</feature>
<feature type="modified residue" description="Phosphoserine; by GSK3-beta" evidence="24 26">
    <location>
        <position position="427"/>
    </location>
</feature>
<feature type="modified residue" description="Phosphoserine" evidence="26">
    <location>
        <position position="431"/>
    </location>
</feature>
<feature type="modified residue" description="Phosphothreonine; by CDK5" evidence="50">
    <location>
        <position position="451"/>
    </location>
</feature>
<feature type="modified residue" description="Phosphothreonine; by CDK5" evidence="50">
    <location>
        <position position="461"/>
    </location>
</feature>
<feature type="cross-link" description="Glycyl lysine isopeptide (Lys-Gly) (interchain with G-Cter in SUMO1)" evidence="42">
    <location>
        <position position="67"/>
    </location>
</feature>
<feature type="cross-link" description="Glycyl lysine isopeptide (Lys-Gly) (interchain with G-Cter in SUMO1)" evidence="42">
    <location>
        <position position="851"/>
    </location>
</feature>
<feature type="splice variant" id="VSP_002103" description="In isoform Short." evidence="64">
    <location>
        <begin position="484"/>
        <end position="513"/>
    </location>
</feature>
<feature type="mutagenesis site" description="Significant decrease in transcriptional activation by the CLOCK-BMAL1 heterodimer. Significant decrease in transcriptional activation by the CLOCK-BMAL1 heterodimer, reduced nuclear localization and DNA-binding; when associated with D-42." evidence="24">
    <original>S</original>
    <variation>D</variation>
    <location>
        <position position="38"/>
    </location>
</feature>
<feature type="mutagenesis site" description="Significant decrease in transcriptional activation by the CLOCK-BMAL1 heterodimer. Significant decrease in transcriptional activation by the CLOCK-BMAL1 heterodimer, reduced nuclear localization and DNA-binding; when associated with D-38." evidence="24">
    <original>S</original>
    <variation>D</variation>
    <location>
        <position position="42"/>
    </location>
</feature>
<feature type="mutagenesis site" description="Reduced BMAL1 binding. Abolishes transcriptional activation by the CLOCK-BMAL1 heterodimer. Abolishes regulation of circadian clock." evidence="38">
    <original>L</original>
    <variation>E</variation>
    <location>
        <position position="57"/>
    </location>
</feature>
<feature type="mutagenesis site" description="Decrease in sumoylation and its transcriptional activity. Abolishes sumoylation and interaction with ESR1 and decrease in its transcriptional activity; when associated with R-851." evidence="42">
    <original>K</original>
    <variation>R</variation>
    <location>
        <position position="67"/>
    </location>
</feature>
<feature type="mutagenesis site" description="Reduced BMAL1 binding. Abolishes transcriptional activation by the CLOCK-BMAL1 heterodimer." evidence="38">
    <original>L</original>
    <variation>E</variation>
    <location>
        <position position="74"/>
    </location>
</feature>
<feature type="mutagenesis site" description="Reduced BMAL1 binding. Slightly reduced transcriptional activation by the CLOCK-BMAL1 heterodimer." evidence="38">
    <original>W</original>
    <variation>A</variation>
    <location>
        <position position="284"/>
    </location>
</feature>
<feature type="mutagenesis site" description="Significant loss of phosphorylation." evidence="24 26">
    <original>S</original>
    <variation>A</variation>
    <location>
        <position position="427"/>
    </location>
</feature>
<feature type="mutagenesis site" description="Significant loss of phosphorylation." evidence="26">
    <original>S</original>
    <variation>A</variation>
    <location>
        <position position="431"/>
    </location>
</feature>
<feature type="mutagenesis site" description="Reduces histone acetyltransferase activity; when associated with A-658 and A-659." evidence="10">
    <original>P</original>
    <variation>A</variation>
    <location>
        <position position="656"/>
    </location>
</feature>
<feature type="mutagenesis site" description="Reduces histone acetyltransferase activity; when associated with A-656 and A-659." evidence="10">
    <original>Y</original>
    <variation>A</variation>
    <location>
        <position position="658"/>
    </location>
</feature>
<feature type="mutagenesis site" description="Reduces histone acetyltransferase activity; when associated with A-656 and A-658." evidence="10">
    <original>N</original>
    <variation>A</variation>
    <location>
        <position position="659"/>
    </location>
</feature>
<feature type="mutagenesis site" description="Reduces histone acetyltransferase activity; when associated with A-670 and A-672." evidence="10">
    <original>G</original>
    <variation>A</variation>
    <location>
        <position position="669"/>
    </location>
</feature>
<feature type="mutagenesis site" description="Reduces histone acetyltransferase activity; when associated with A-669 and A-672." evidence="10">
    <original>S</original>
    <variation>A</variation>
    <location>
        <position position="670"/>
    </location>
</feature>
<feature type="mutagenesis site" description="Reduces histone acetyltransferase activity; when associated with A-669 and A-670." evidence="10">
    <original>V</original>
    <variation>A</variation>
    <location>
        <position position="672"/>
    </location>
</feature>
<feature type="mutagenesis site" description="Decrease in sumoylation and its transcriptional activity. Abolishes sumoylation and interaction with ESR1 and decrease in its transcriptional activity; when associated with R-67." evidence="42">
    <original>K</original>
    <variation>R</variation>
    <location>
        <position position="851"/>
    </location>
</feature>
<feature type="helix" evidence="66">
    <location>
        <begin position="43"/>
        <end position="59"/>
    </location>
</feature>
<feature type="strand" evidence="66">
    <location>
        <begin position="63"/>
        <end position="65"/>
    </location>
</feature>
<feature type="helix" evidence="66">
    <location>
        <begin position="70"/>
        <end position="88"/>
    </location>
</feature>
<feature type="helix" evidence="66">
    <location>
        <begin position="94"/>
        <end position="96"/>
    </location>
</feature>
<feature type="helix" evidence="66">
    <location>
        <begin position="107"/>
        <end position="117"/>
    </location>
</feature>
<feature type="strand" evidence="66">
    <location>
        <begin position="120"/>
        <end position="126"/>
    </location>
</feature>
<feature type="strand" evidence="66">
    <location>
        <begin position="129"/>
        <end position="134"/>
    </location>
</feature>
<feature type="helix" evidence="66">
    <location>
        <begin position="138"/>
        <end position="142"/>
    </location>
</feature>
<feature type="helix" evidence="66">
    <location>
        <begin position="146"/>
        <end position="149"/>
    </location>
</feature>
<feature type="helix" evidence="66">
    <location>
        <begin position="154"/>
        <end position="157"/>
    </location>
</feature>
<feature type="helix" evidence="66">
    <location>
        <begin position="160"/>
        <end position="162"/>
    </location>
</feature>
<feature type="helix" evidence="66">
    <location>
        <begin position="163"/>
        <end position="172"/>
    </location>
</feature>
<feature type="strand" evidence="66">
    <location>
        <begin position="179"/>
        <end position="181"/>
    </location>
</feature>
<feature type="helix" evidence="66">
    <location>
        <begin position="183"/>
        <end position="185"/>
    </location>
</feature>
<feature type="helix" evidence="66">
    <location>
        <begin position="187"/>
        <end position="189"/>
    </location>
</feature>
<feature type="strand" evidence="66">
    <location>
        <begin position="190"/>
        <end position="198"/>
    </location>
</feature>
<feature type="strand" evidence="66">
    <location>
        <begin position="204"/>
        <end position="206"/>
    </location>
</feature>
<feature type="strand" evidence="66">
    <location>
        <begin position="210"/>
        <end position="221"/>
    </location>
</feature>
<feature type="strand" evidence="66">
    <location>
        <begin position="249"/>
        <end position="259"/>
    </location>
</feature>
<feature type="strand" evidence="66">
    <location>
        <begin position="262"/>
        <end position="266"/>
    </location>
</feature>
<feature type="strand" evidence="66">
    <location>
        <begin position="270"/>
        <end position="272"/>
    </location>
</feature>
<feature type="strand" evidence="66">
    <location>
        <begin position="275"/>
        <end position="280"/>
    </location>
</feature>
<feature type="strand" evidence="66">
    <location>
        <begin position="284"/>
        <end position="289"/>
    </location>
</feature>
<feature type="helix" evidence="66">
    <location>
        <begin position="294"/>
        <end position="297"/>
    </location>
</feature>
<feature type="helix" evidence="66">
    <location>
        <begin position="301"/>
        <end position="304"/>
    </location>
</feature>
<feature type="helix" evidence="66">
    <location>
        <begin position="309"/>
        <end position="312"/>
    </location>
</feature>
<feature type="helix" evidence="66">
    <location>
        <begin position="315"/>
        <end position="331"/>
    </location>
</feature>
<feature type="strand" evidence="66">
    <location>
        <begin position="332"/>
        <end position="335"/>
    </location>
</feature>
<feature type="strand" evidence="66">
    <location>
        <begin position="339"/>
        <end position="342"/>
    </location>
</feature>
<feature type="strand" evidence="66">
    <location>
        <begin position="346"/>
        <end position="359"/>
    </location>
</feature>
<feature type="turn" evidence="66">
    <location>
        <begin position="361"/>
        <end position="363"/>
    </location>
</feature>
<feature type="strand" evidence="66">
    <location>
        <begin position="366"/>
        <end position="375"/>
    </location>
</feature>
<feature type="helix" evidence="66">
    <location>
        <begin position="378"/>
        <end position="383"/>
    </location>
</feature>
<feature type="helix" evidence="67">
    <location>
        <begin position="516"/>
        <end position="555"/>
    </location>
</feature>
<gene>
    <name type="primary">Clock</name>
</gene>
<organism>
    <name type="scientific">Mus musculus</name>
    <name type="common">Mouse</name>
    <dbReference type="NCBI Taxonomy" id="10090"/>
    <lineage>
        <taxon>Eukaryota</taxon>
        <taxon>Metazoa</taxon>
        <taxon>Chordata</taxon>
        <taxon>Craniata</taxon>
        <taxon>Vertebrata</taxon>
        <taxon>Euteleostomi</taxon>
        <taxon>Mammalia</taxon>
        <taxon>Eutheria</taxon>
        <taxon>Euarchontoglires</taxon>
        <taxon>Glires</taxon>
        <taxon>Rodentia</taxon>
        <taxon>Myomorpha</taxon>
        <taxon>Muroidea</taxon>
        <taxon>Muridae</taxon>
        <taxon>Murinae</taxon>
        <taxon>Mus</taxon>
        <taxon>Mus</taxon>
    </lineage>
</organism>
<proteinExistence type="evidence at protein level"/>
<protein>
    <recommendedName>
        <fullName>Circadian locomoter output cycles protein kaput</fullName>
        <shortName>mCLOCK</shortName>
        <ecNumber>2.3.1.48</ecNumber>
    </recommendedName>
</protein>
<keyword id="KW-0002">3D-structure</keyword>
<keyword id="KW-0010">Activator</keyword>
<keyword id="KW-0012">Acyltransferase</keyword>
<keyword id="KW-0025">Alternative splicing</keyword>
<keyword id="KW-0090">Biological rhythms</keyword>
<keyword id="KW-0963">Cytoplasm</keyword>
<keyword id="KW-0227">DNA damage</keyword>
<keyword id="KW-0238">DNA-binding</keyword>
<keyword id="KW-0325">Glycoprotein</keyword>
<keyword id="KW-1017">Isopeptide bond</keyword>
<keyword id="KW-0539">Nucleus</keyword>
<keyword id="KW-0597">Phosphoprotein</keyword>
<keyword id="KW-1185">Reference proteome</keyword>
<keyword id="KW-0677">Repeat</keyword>
<keyword id="KW-0804">Transcription</keyword>
<keyword id="KW-0805">Transcription regulation</keyword>
<keyword id="KW-0808">Transferase</keyword>
<keyword id="KW-0832">Ubl conjugation</keyword>